<feature type="chain" id="PRO_0000121342" description="DNA-directed RNA polymerases I, II, and III subunit RPABC5">
    <location>
        <begin position="1"/>
        <end position="70"/>
    </location>
</feature>
<feature type="binding site" evidence="5 11">
    <location>
        <position position="7"/>
    </location>
    <ligand>
        <name>Zn(2+)</name>
        <dbReference type="ChEBI" id="CHEBI:29105"/>
    </ligand>
</feature>
<feature type="binding site" evidence="5 11">
    <location>
        <position position="10"/>
    </location>
    <ligand>
        <name>Zn(2+)</name>
        <dbReference type="ChEBI" id="CHEBI:29105"/>
    </ligand>
</feature>
<feature type="binding site" evidence="5 11">
    <location>
        <position position="45"/>
    </location>
    <ligand>
        <name>Zn(2+)</name>
        <dbReference type="ChEBI" id="CHEBI:29105"/>
    </ligand>
</feature>
<feature type="binding site" evidence="5 11">
    <location>
        <position position="46"/>
    </location>
    <ligand>
        <name>Zn(2+)</name>
        <dbReference type="ChEBI" id="CHEBI:29105"/>
    </ligand>
</feature>
<feature type="cross-link" description="Glycyl lysine isopeptide (Lys-Gly) (interchain with G-Cter in ubiquitin)" evidence="12">
    <location>
        <position position="59"/>
    </location>
</feature>
<feature type="turn" evidence="14">
    <location>
        <begin position="8"/>
        <end position="10"/>
    </location>
</feature>
<feature type="helix" evidence="16">
    <location>
        <begin position="15"/>
        <end position="17"/>
    </location>
</feature>
<feature type="helix" evidence="14">
    <location>
        <begin position="18"/>
        <end position="26"/>
    </location>
</feature>
<feature type="turn" evidence="13">
    <location>
        <begin position="27"/>
        <end position="29"/>
    </location>
</feature>
<feature type="helix" evidence="14">
    <location>
        <begin position="32"/>
        <end position="38"/>
    </location>
</feature>
<feature type="helix" evidence="14">
    <location>
        <begin position="44"/>
        <end position="51"/>
    </location>
</feature>
<feature type="helix" evidence="14">
    <location>
        <begin position="57"/>
        <end position="61"/>
    </location>
</feature>
<feature type="strand" evidence="15">
    <location>
        <begin position="65"/>
        <end position="67"/>
    </location>
</feature>
<name>RPAB5_YEAST</name>
<evidence type="ECO:0000269" key="1">
    <source>
    </source>
</evidence>
<evidence type="ECO:0000269" key="2">
    <source>
    </source>
</evidence>
<evidence type="ECO:0000269" key="3">
    <source>
    </source>
</evidence>
<evidence type="ECO:0000269" key="4">
    <source>
    </source>
</evidence>
<evidence type="ECO:0000269" key="5">
    <source>
    </source>
</evidence>
<evidence type="ECO:0000269" key="6">
    <source>
    </source>
</evidence>
<evidence type="ECO:0000269" key="7">
    <source>
    </source>
</evidence>
<evidence type="ECO:0000269" key="8">
    <source>
    </source>
</evidence>
<evidence type="ECO:0000269" key="9">
    <source>
    </source>
</evidence>
<evidence type="ECO:0000305" key="10"/>
<evidence type="ECO:0007744" key="11">
    <source>
        <dbReference type="PDB" id="1TWF"/>
    </source>
</evidence>
<evidence type="ECO:0007744" key="12">
    <source>
    </source>
</evidence>
<evidence type="ECO:0007829" key="13">
    <source>
        <dbReference type="PDB" id="1I6H"/>
    </source>
</evidence>
<evidence type="ECO:0007829" key="14">
    <source>
        <dbReference type="PDB" id="1TWF"/>
    </source>
</evidence>
<evidence type="ECO:0007829" key="15">
    <source>
        <dbReference type="PDB" id="6RUO"/>
    </source>
</evidence>
<evidence type="ECO:0007829" key="16">
    <source>
        <dbReference type="PDB" id="7NKX"/>
    </source>
</evidence>
<comment type="function">
    <text evidence="7 8 9">DNA-dependent RNA polymerases catalyze the transcription of DNA into RNA using the four ribonucleoside triphosphates as substrates. Common component of RNA polymerases I, II and III which synthesize ribosomal RNA precursors, mRNA precursors and many functional non-coding RNAs, and a small RNAs, such as 5S rRNA and tRNAs, respectively. Pol II is the central component of the basal RNA polymerase II transcription machinery. Pols are composed of mobile elements that move relative to each other. In Pol II, RBP10 is part of the core element with the central large cleft.</text>
</comment>
<comment type="subunit">
    <text evidence="1 2 6 7 8 9">Component of the RNA polymerase I (Pol I), RNA polymerase II (Pol II) and RNA polymerase III (Pol III) complexes. Component of the RNA polymerase I (Pol I) complex consisting of 14 subunits: RPA135, RPA190, RPC40, RPA14, RPB5, RPO26, RPA43, RPB8, RPA12, RPB10, RPC19, RPC10, RPA49 and RPA34. The complex is composed of a horseshoe-shaped core containing ten subunits (RPA135, RPA190, RPB5, RPO26, RPB8, RPB10, RPC10, RPA12, RPC19 and RPC40) where RPA135 and RPA190 form the DNA-binding cleft. Outside of the core, RPA14 and RPA43 form the stalk that mediates interactions with transcription initiation factors and newly synthesized RNA. Component of the RNA polymerase II (Pol II) complex consisting of 12 subunits: RPO21, RPB2, RPB3, RPB4, RPB5, RPO26, RPB7, RPB8, RPB9, RPB10 and RPC10. Component of the RNA polymerase III (Pol III) complex consisting of 17 subunits.</text>
</comment>
<comment type="interaction">
    <interactant intactId="EBI-15802">
        <id>P22139</id>
    </interactant>
    <interactant intactId="EBI-15736">
        <id>P22138</id>
        <label>RPA135</label>
    </interactant>
    <organismsDiffer>false</organismsDiffer>
    <experiments>2</experiments>
</comment>
<comment type="interaction">
    <interactant intactId="EBI-15802">
        <id>P22139</id>
    </interactant>
    <interactant intactId="EBI-15767">
        <id>P08518</id>
        <label>RPB2</label>
    </interactant>
    <organismsDiffer>false</organismsDiffer>
    <experiments>3</experiments>
</comment>
<comment type="interaction">
    <interactant intactId="EBI-15802">
        <id>P22139</id>
    </interactant>
    <interactant intactId="EBI-25782">
        <id>P47076</id>
        <label>RPC17</label>
    </interactant>
    <organismsDiffer>false</organismsDiffer>
    <experiments>2</experiments>
</comment>
<comment type="interaction">
    <interactant intactId="EBI-15802">
        <id>P22139</id>
    </interactant>
    <interactant intactId="EBI-15760">
        <id>P04050</id>
        <label>RPO21</label>
    </interactant>
    <organismsDiffer>false</organismsDiffer>
    <experiments>2</experiments>
</comment>
<comment type="subcellular location">
    <subcellularLocation>
        <location evidence="3">Nucleus</location>
        <location evidence="3">Nucleolus</location>
    </subcellularLocation>
</comment>
<comment type="miscellaneous">
    <text evidence="4">Present with 5300 molecules/cell in log phase SD medium.</text>
</comment>
<comment type="similarity">
    <text evidence="10">Belongs to the archaeal Rpo10/eukaryotic RPB10 RNA polymerase subunit family.</text>
</comment>
<dbReference type="EMBL" id="M60479">
    <property type="protein sequence ID" value="AAA34995.1"/>
    <property type="status" value="ALT_SEQ"/>
    <property type="molecule type" value="Genomic_DNA"/>
</dbReference>
<dbReference type="EMBL" id="S62098">
    <property type="protein sequence ID" value="AAB27020.1"/>
    <property type="molecule type" value="Genomic_DNA"/>
</dbReference>
<dbReference type="EMBL" id="L11274">
    <property type="protein sequence ID" value="AAB59318.1"/>
    <property type="molecule type" value="Genomic_DNA"/>
</dbReference>
<dbReference type="EMBL" id="Z75118">
    <property type="protein sequence ID" value="CAA99425.1"/>
    <property type="molecule type" value="Genomic_DNA"/>
</dbReference>
<dbReference type="EMBL" id="AY558433">
    <property type="protein sequence ID" value="AAS56759.1"/>
    <property type="molecule type" value="Genomic_DNA"/>
</dbReference>
<dbReference type="EMBL" id="BK006948">
    <property type="protein sequence ID" value="DAA10982.1"/>
    <property type="molecule type" value="Genomic_DNA"/>
</dbReference>
<dbReference type="PIR" id="S48885">
    <property type="entry name" value="S48885"/>
</dbReference>
<dbReference type="RefSeq" id="NP_014853.3">
    <property type="nucleotide sequence ID" value="NM_001183629.3"/>
</dbReference>
<dbReference type="PDB" id="1I3Q">
    <property type="method" value="X-ray"/>
    <property type="resolution" value="3.10 A"/>
    <property type="chains" value="J=1-70"/>
</dbReference>
<dbReference type="PDB" id="1I50">
    <property type="method" value="X-ray"/>
    <property type="resolution" value="2.80 A"/>
    <property type="chains" value="J=1-70"/>
</dbReference>
<dbReference type="PDB" id="1I6H">
    <property type="method" value="X-ray"/>
    <property type="resolution" value="3.30 A"/>
    <property type="chains" value="J=1-70"/>
</dbReference>
<dbReference type="PDB" id="1K83">
    <property type="method" value="X-ray"/>
    <property type="resolution" value="2.80 A"/>
    <property type="chains" value="J=1-70"/>
</dbReference>
<dbReference type="PDB" id="1NIK">
    <property type="method" value="X-ray"/>
    <property type="resolution" value="4.10 A"/>
    <property type="chains" value="J=1-70"/>
</dbReference>
<dbReference type="PDB" id="1NT9">
    <property type="method" value="X-ray"/>
    <property type="resolution" value="4.20 A"/>
    <property type="chains" value="J=1-70"/>
</dbReference>
<dbReference type="PDB" id="1PQV">
    <property type="method" value="X-ray"/>
    <property type="resolution" value="3.80 A"/>
    <property type="chains" value="J=1-70"/>
</dbReference>
<dbReference type="PDB" id="1R5U">
    <property type="method" value="X-ray"/>
    <property type="resolution" value="4.50 A"/>
    <property type="chains" value="J=1-70"/>
</dbReference>
<dbReference type="PDB" id="1R9S">
    <property type="method" value="X-ray"/>
    <property type="resolution" value="4.25 A"/>
    <property type="chains" value="J=1-70"/>
</dbReference>
<dbReference type="PDB" id="1R9T">
    <property type="method" value="X-ray"/>
    <property type="resolution" value="3.50 A"/>
    <property type="chains" value="J=1-70"/>
</dbReference>
<dbReference type="PDB" id="1SFO">
    <property type="method" value="X-ray"/>
    <property type="resolution" value="3.61 A"/>
    <property type="chains" value="J=1-70"/>
</dbReference>
<dbReference type="PDB" id="1TWA">
    <property type="method" value="X-ray"/>
    <property type="resolution" value="3.20 A"/>
    <property type="chains" value="J=1-70"/>
</dbReference>
<dbReference type="PDB" id="1TWC">
    <property type="method" value="X-ray"/>
    <property type="resolution" value="3.00 A"/>
    <property type="chains" value="J=1-70"/>
</dbReference>
<dbReference type="PDB" id="1TWF">
    <property type="method" value="X-ray"/>
    <property type="resolution" value="2.30 A"/>
    <property type="chains" value="J=1-70"/>
</dbReference>
<dbReference type="PDB" id="1TWG">
    <property type="method" value="X-ray"/>
    <property type="resolution" value="3.30 A"/>
    <property type="chains" value="J=1-70"/>
</dbReference>
<dbReference type="PDB" id="1TWH">
    <property type="method" value="X-ray"/>
    <property type="resolution" value="3.40 A"/>
    <property type="chains" value="J=1-70"/>
</dbReference>
<dbReference type="PDB" id="1WCM">
    <property type="method" value="X-ray"/>
    <property type="resolution" value="3.80 A"/>
    <property type="chains" value="J=1-70"/>
</dbReference>
<dbReference type="PDB" id="1Y1V">
    <property type="method" value="X-ray"/>
    <property type="resolution" value="3.80 A"/>
    <property type="chains" value="J=1-70"/>
</dbReference>
<dbReference type="PDB" id="1Y1W">
    <property type="method" value="X-ray"/>
    <property type="resolution" value="4.00 A"/>
    <property type="chains" value="J=1-70"/>
</dbReference>
<dbReference type="PDB" id="1Y1Y">
    <property type="method" value="X-ray"/>
    <property type="resolution" value="4.00 A"/>
    <property type="chains" value="J=1-70"/>
</dbReference>
<dbReference type="PDB" id="1Y77">
    <property type="method" value="X-ray"/>
    <property type="resolution" value="4.50 A"/>
    <property type="chains" value="J=1-70"/>
</dbReference>
<dbReference type="PDB" id="2B63">
    <property type="method" value="X-ray"/>
    <property type="resolution" value="3.80 A"/>
    <property type="chains" value="J=1-70"/>
</dbReference>
<dbReference type="PDB" id="2B8K">
    <property type="method" value="X-ray"/>
    <property type="resolution" value="4.15 A"/>
    <property type="chains" value="J=1-70"/>
</dbReference>
<dbReference type="PDB" id="2E2H">
    <property type="method" value="X-ray"/>
    <property type="resolution" value="3.95 A"/>
    <property type="chains" value="J=1-70"/>
</dbReference>
<dbReference type="PDB" id="2E2I">
    <property type="method" value="X-ray"/>
    <property type="resolution" value="3.41 A"/>
    <property type="chains" value="J=1-70"/>
</dbReference>
<dbReference type="PDB" id="2E2J">
    <property type="method" value="X-ray"/>
    <property type="resolution" value="3.50 A"/>
    <property type="chains" value="J=1-70"/>
</dbReference>
<dbReference type="PDB" id="2JA5">
    <property type="method" value="X-ray"/>
    <property type="resolution" value="3.80 A"/>
    <property type="chains" value="J=1-70"/>
</dbReference>
<dbReference type="PDB" id="2JA6">
    <property type="method" value="X-ray"/>
    <property type="resolution" value="4.00 A"/>
    <property type="chains" value="J=1-70"/>
</dbReference>
<dbReference type="PDB" id="2JA7">
    <property type="method" value="X-ray"/>
    <property type="resolution" value="3.80 A"/>
    <property type="chains" value="J/V=1-70"/>
</dbReference>
<dbReference type="PDB" id="2JA8">
    <property type="method" value="X-ray"/>
    <property type="resolution" value="3.80 A"/>
    <property type="chains" value="J=1-70"/>
</dbReference>
<dbReference type="PDB" id="2NVQ">
    <property type="method" value="X-ray"/>
    <property type="resolution" value="2.90 A"/>
    <property type="chains" value="J=1-70"/>
</dbReference>
<dbReference type="PDB" id="2NVT">
    <property type="method" value="X-ray"/>
    <property type="resolution" value="3.36 A"/>
    <property type="chains" value="J=1-70"/>
</dbReference>
<dbReference type="PDB" id="2NVX">
    <property type="method" value="X-ray"/>
    <property type="resolution" value="3.60 A"/>
    <property type="chains" value="J=1-70"/>
</dbReference>
<dbReference type="PDB" id="2NVY">
    <property type="method" value="X-ray"/>
    <property type="resolution" value="3.40 A"/>
    <property type="chains" value="J=1-70"/>
</dbReference>
<dbReference type="PDB" id="2NVZ">
    <property type="method" value="X-ray"/>
    <property type="resolution" value="4.30 A"/>
    <property type="chains" value="J=1-70"/>
</dbReference>
<dbReference type="PDB" id="2R7Z">
    <property type="method" value="X-ray"/>
    <property type="resolution" value="3.80 A"/>
    <property type="chains" value="J=1-70"/>
</dbReference>
<dbReference type="PDB" id="2R92">
    <property type="method" value="X-ray"/>
    <property type="resolution" value="3.80 A"/>
    <property type="chains" value="J=1-70"/>
</dbReference>
<dbReference type="PDB" id="2R93">
    <property type="method" value="X-ray"/>
    <property type="resolution" value="4.00 A"/>
    <property type="chains" value="J=1-70"/>
</dbReference>
<dbReference type="PDB" id="2VUM">
    <property type="method" value="X-ray"/>
    <property type="resolution" value="3.40 A"/>
    <property type="chains" value="J=1-70"/>
</dbReference>
<dbReference type="PDB" id="2YU9">
    <property type="method" value="X-ray"/>
    <property type="resolution" value="3.40 A"/>
    <property type="chains" value="J=1-70"/>
</dbReference>
<dbReference type="PDB" id="3CQZ">
    <property type="method" value="X-ray"/>
    <property type="resolution" value="2.80 A"/>
    <property type="chains" value="J=1-70"/>
</dbReference>
<dbReference type="PDB" id="3FKI">
    <property type="method" value="X-ray"/>
    <property type="resolution" value="3.88 A"/>
    <property type="chains" value="J=1-70"/>
</dbReference>
<dbReference type="PDB" id="3GTG">
    <property type="method" value="X-ray"/>
    <property type="resolution" value="3.78 A"/>
    <property type="chains" value="J=1-70"/>
</dbReference>
<dbReference type="PDB" id="3GTJ">
    <property type="method" value="X-ray"/>
    <property type="resolution" value="3.42 A"/>
    <property type="chains" value="J=1-70"/>
</dbReference>
<dbReference type="PDB" id="3GTK">
    <property type="method" value="X-ray"/>
    <property type="resolution" value="3.80 A"/>
    <property type="chains" value="J=1-70"/>
</dbReference>
<dbReference type="PDB" id="3GTL">
    <property type="method" value="X-ray"/>
    <property type="resolution" value="3.38 A"/>
    <property type="chains" value="J=1-70"/>
</dbReference>
<dbReference type="PDB" id="3GTM">
    <property type="method" value="X-ray"/>
    <property type="resolution" value="3.80 A"/>
    <property type="chains" value="J=1-70"/>
</dbReference>
<dbReference type="PDB" id="3GTO">
    <property type="method" value="X-ray"/>
    <property type="resolution" value="4.00 A"/>
    <property type="chains" value="J=1-70"/>
</dbReference>
<dbReference type="PDB" id="3GTP">
    <property type="method" value="X-ray"/>
    <property type="resolution" value="3.90 A"/>
    <property type="chains" value="J=1-70"/>
</dbReference>
<dbReference type="PDB" id="3GTQ">
    <property type="method" value="X-ray"/>
    <property type="resolution" value="3.80 A"/>
    <property type="chains" value="J=1-70"/>
</dbReference>
<dbReference type="PDB" id="3H3V">
    <property type="method" value="X-ray"/>
    <property type="resolution" value="4.00 A"/>
    <property type="chains" value="K=1-70"/>
</dbReference>
<dbReference type="PDB" id="3HOU">
    <property type="method" value="X-ray"/>
    <property type="resolution" value="3.20 A"/>
    <property type="chains" value="J/V=1-70"/>
</dbReference>
<dbReference type="PDB" id="3HOV">
    <property type="method" value="X-ray"/>
    <property type="resolution" value="3.50 A"/>
    <property type="chains" value="J=1-70"/>
</dbReference>
<dbReference type="PDB" id="3HOW">
    <property type="method" value="X-ray"/>
    <property type="resolution" value="3.60 A"/>
    <property type="chains" value="J=1-70"/>
</dbReference>
<dbReference type="PDB" id="3HOX">
    <property type="method" value="X-ray"/>
    <property type="resolution" value="3.65 A"/>
    <property type="chains" value="J=1-70"/>
</dbReference>
<dbReference type="PDB" id="3HOY">
    <property type="method" value="X-ray"/>
    <property type="resolution" value="3.40 A"/>
    <property type="chains" value="J=1-70"/>
</dbReference>
<dbReference type="PDB" id="3HOZ">
    <property type="method" value="X-ray"/>
    <property type="resolution" value="3.65 A"/>
    <property type="chains" value="J=1-70"/>
</dbReference>
<dbReference type="PDB" id="3I4M">
    <property type="method" value="X-ray"/>
    <property type="resolution" value="3.70 A"/>
    <property type="chains" value="J=1-70"/>
</dbReference>
<dbReference type="PDB" id="3I4N">
    <property type="method" value="X-ray"/>
    <property type="resolution" value="3.90 A"/>
    <property type="chains" value="J=1-70"/>
</dbReference>
<dbReference type="PDB" id="3J0K">
    <property type="method" value="EM"/>
    <property type="resolution" value="36.00 A"/>
    <property type="chains" value="J=1-70"/>
</dbReference>
<dbReference type="PDB" id="3J1N">
    <property type="method" value="EM"/>
    <property type="resolution" value="16.00 A"/>
    <property type="chains" value="J=1-70"/>
</dbReference>
<dbReference type="PDB" id="3K1F">
    <property type="method" value="X-ray"/>
    <property type="resolution" value="4.30 A"/>
    <property type="chains" value="J=1-70"/>
</dbReference>
<dbReference type="PDB" id="3K7A">
    <property type="method" value="X-ray"/>
    <property type="resolution" value="3.80 A"/>
    <property type="chains" value="J=1-70"/>
</dbReference>
<dbReference type="PDB" id="3M3Y">
    <property type="method" value="X-ray"/>
    <property type="resolution" value="3.18 A"/>
    <property type="chains" value="J=1-70"/>
</dbReference>
<dbReference type="PDB" id="3M4O">
    <property type="method" value="X-ray"/>
    <property type="resolution" value="3.57 A"/>
    <property type="chains" value="J=1-70"/>
</dbReference>
<dbReference type="PDB" id="3PO2">
    <property type="method" value="X-ray"/>
    <property type="resolution" value="3.30 A"/>
    <property type="chains" value="J=1-70"/>
</dbReference>
<dbReference type="PDB" id="3PO3">
    <property type="method" value="X-ray"/>
    <property type="resolution" value="3.30 A"/>
    <property type="chains" value="J=1-70"/>
</dbReference>
<dbReference type="PDB" id="3QT1">
    <property type="method" value="X-ray"/>
    <property type="resolution" value="4.30 A"/>
    <property type="chains" value="J=1-70"/>
</dbReference>
<dbReference type="PDB" id="3RZD">
    <property type="method" value="X-ray"/>
    <property type="resolution" value="3.30 A"/>
    <property type="chains" value="J=1-70"/>
</dbReference>
<dbReference type="PDB" id="3RZO">
    <property type="method" value="X-ray"/>
    <property type="resolution" value="3.00 A"/>
    <property type="chains" value="J=1-70"/>
</dbReference>
<dbReference type="PDB" id="3S14">
    <property type="method" value="X-ray"/>
    <property type="resolution" value="2.85 A"/>
    <property type="chains" value="J=1-70"/>
</dbReference>
<dbReference type="PDB" id="3S15">
    <property type="method" value="X-ray"/>
    <property type="resolution" value="3.30 A"/>
    <property type="chains" value="J=1-70"/>
</dbReference>
<dbReference type="PDB" id="3S16">
    <property type="method" value="X-ray"/>
    <property type="resolution" value="3.24 A"/>
    <property type="chains" value="J=1-70"/>
</dbReference>
<dbReference type="PDB" id="3S17">
    <property type="method" value="X-ray"/>
    <property type="resolution" value="3.20 A"/>
    <property type="chains" value="J=1-70"/>
</dbReference>
<dbReference type="PDB" id="3S1M">
    <property type="method" value="X-ray"/>
    <property type="resolution" value="3.13 A"/>
    <property type="chains" value="J=1-70"/>
</dbReference>
<dbReference type="PDB" id="3S1N">
    <property type="method" value="X-ray"/>
    <property type="resolution" value="3.10 A"/>
    <property type="chains" value="J=1-70"/>
</dbReference>
<dbReference type="PDB" id="3S1Q">
    <property type="method" value="X-ray"/>
    <property type="resolution" value="3.30 A"/>
    <property type="chains" value="J=1-70"/>
</dbReference>
<dbReference type="PDB" id="3S1R">
    <property type="method" value="X-ray"/>
    <property type="resolution" value="3.20 A"/>
    <property type="chains" value="J=1-70"/>
</dbReference>
<dbReference type="PDB" id="3S2D">
    <property type="method" value="X-ray"/>
    <property type="resolution" value="3.20 A"/>
    <property type="chains" value="J=1-70"/>
</dbReference>
<dbReference type="PDB" id="3S2H">
    <property type="method" value="X-ray"/>
    <property type="resolution" value="3.30 A"/>
    <property type="chains" value="J=1-70"/>
</dbReference>
<dbReference type="PDB" id="4A3B">
    <property type="method" value="X-ray"/>
    <property type="resolution" value="3.50 A"/>
    <property type="chains" value="J=1-70"/>
</dbReference>
<dbReference type="PDB" id="4A3C">
    <property type="method" value="X-ray"/>
    <property type="resolution" value="3.50 A"/>
    <property type="chains" value="J=1-70"/>
</dbReference>
<dbReference type="PDB" id="4A3D">
    <property type="method" value="X-ray"/>
    <property type="resolution" value="3.40 A"/>
    <property type="chains" value="J=1-70"/>
</dbReference>
<dbReference type="PDB" id="4A3E">
    <property type="method" value="X-ray"/>
    <property type="resolution" value="3.40 A"/>
    <property type="chains" value="J=1-70"/>
</dbReference>
<dbReference type="PDB" id="4A3F">
    <property type="method" value="X-ray"/>
    <property type="resolution" value="3.50 A"/>
    <property type="chains" value="J=1-70"/>
</dbReference>
<dbReference type="PDB" id="4A3G">
    <property type="method" value="X-ray"/>
    <property type="resolution" value="3.50 A"/>
    <property type="chains" value="J=1-70"/>
</dbReference>
<dbReference type="PDB" id="4A3I">
    <property type="method" value="X-ray"/>
    <property type="resolution" value="3.80 A"/>
    <property type="chains" value="J=1-70"/>
</dbReference>
<dbReference type="PDB" id="4A3J">
    <property type="method" value="X-ray"/>
    <property type="resolution" value="3.70 A"/>
    <property type="chains" value="J=1-70"/>
</dbReference>
<dbReference type="PDB" id="4A3K">
    <property type="method" value="X-ray"/>
    <property type="resolution" value="3.50 A"/>
    <property type="chains" value="J=1-70"/>
</dbReference>
<dbReference type="PDB" id="4A3L">
    <property type="method" value="X-ray"/>
    <property type="resolution" value="3.50 A"/>
    <property type="chains" value="J=1-70"/>
</dbReference>
<dbReference type="PDB" id="4A3M">
    <property type="method" value="X-ray"/>
    <property type="resolution" value="3.90 A"/>
    <property type="chains" value="J=1-70"/>
</dbReference>
<dbReference type="PDB" id="4A93">
    <property type="method" value="X-ray"/>
    <property type="resolution" value="3.40 A"/>
    <property type="chains" value="J=1-70"/>
</dbReference>
<dbReference type="PDB" id="4BBR">
    <property type="method" value="X-ray"/>
    <property type="resolution" value="3.40 A"/>
    <property type="chains" value="J=1-70"/>
</dbReference>
<dbReference type="PDB" id="4BBS">
    <property type="method" value="X-ray"/>
    <property type="resolution" value="3.60 A"/>
    <property type="chains" value="J=1-70"/>
</dbReference>
<dbReference type="PDB" id="4BXX">
    <property type="method" value="X-ray"/>
    <property type="resolution" value="3.28 A"/>
    <property type="chains" value="J=1-70"/>
</dbReference>
<dbReference type="PDB" id="4BXZ">
    <property type="method" value="X-ray"/>
    <property type="resolution" value="4.80 A"/>
    <property type="chains" value="J=1-70"/>
</dbReference>
<dbReference type="PDB" id="4BY1">
    <property type="method" value="X-ray"/>
    <property type="resolution" value="3.60 A"/>
    <property type="chains" value="J=1-70"/>
</dbReference>
<dbReference type="PDB" id="4BY7">
    <property type="method" value="X-ray"/>
    <property type="resolution" value="3.15 A"/>
    <property type="chains" value="J=1-70"/>
</dbReference>
<dbReference type="PDB" id="4C2M">
    <property type="method" value="X-ray"/>
    <property type="resolution" value="2.80 A"/>
    <property type="chains" value="J/Y=1-70"/>
</dbReference>
<dbReference type="PDB" id="4C3H">
    <property type="method" value="X-ray"/>
    <property type="resolution" value="3.27 A"/>
    <property type="chains" value="J=1-70"/>
</dbReference>
<dbReference type="PDB" id="4C3I">
    <property type="method" value="X-ray"/>
    <property type="resolution" value="3.00 A"/>
    <property type="chains" value="J=1-70"/>
</dbReference>
<dbReference type="PDB" id="4C3J">
    <property type="method" value="X-ray"/>
    <property type="resolution" value="3.35 A"/>
    <property type="chains" value="J=1-70"/>
</dbReference>
<dbReference type="PDB" id="4V1M">
    <property type="method" value="EM"/>
    <property type="resolution" value="6.60 A"/>
    <property type="chains" value="J=1-70"/>
</dbReference>
<dbReference type="PDB" id="4V1N">
    <property type="method" value="EM"/>
    <property type="resolution" value="7.80 A"/>
    <property type="chains" value="J=1-70"/>
</dbReference>
<dbReference type="PDB" id="4V1O">
    <property type="method" value="EM"/>
    <property type="resolution" value="9.70 A"/>
    <property type="chains" value="J=1-70"/>
</dbReference>
<dbReference type="PDB" id="4X67">
    <property type="method" value="X-ray"/>
    <property type="resolution" value="4.10 A"/>
    <property type="chains" value="J=1-70"/>
</dbReference>
<dbReference type="PDB" id="4X6A">
    <property type="method" value="X-ray"/>
    <property type="resolution" value="3.96 A"/>
    <property type="chains" value="J=1-70"/>
</dbReference>
<dbReference type="PDB" id="4Y52">
    <property type="method" value="X-ray"/>
    <property type="resolution" value="3.50 A"/>
    <property type="chains" value="J=1-70"/>
</dbReference>
<dbReference type="PDB" id="4Y7N">
    <property type="method" value="X-ray"/>
    <property type="resolution" value="3.30 A"/>
    <property type="chains" value="J=1-70"/>
</dbReference>
<dbReference type="PDB" id="4YM7">
    <property type="method" value="X-ray"/>
    <property type="resolution" value="5.50 A"/>
    <property type="chains" value="AJ/BJ/CJ/DJ/EJ/FJ=1-70"/>
</dbReference>
<dbReference type="PDB" id="5C3E">
    <property type="method" value="X-ray"/>
    <property type="resolution" value="3.70 A"/>
    <property type="chains" value="J=1-70"/>
</dbReference>
<dbReference type="PDB" id="5C44">
    <property type="method" value="X-ray"/>
    <property type="resolution" value="3.95 A"/>
    <property type="chains" value="J=1-70"/>
</dbReference>
<dbReference type="PDB" id="5C4A">
    <property type="method" value="X-ray"/>
    <property type="resolution" value="4.20 A"/>
    <property type="chains" value="J=1-70"/>
</dbReference>
<dbReference type="PDB" id="5C4J">
    <property type="method" value="X-ray"/>
    <property type="resolution" value="4.00 A"/>
    <property type="chains" value="J=1-70"/>
</dbReference>
<dbReference type="PDB" id="5C4X">
    <property type="method" value="X-ray"/>
    <property type="resolution" value="4.00 A"/>
    <property type="chains" value="J=1-70"/>
</dbReference>
<dbReference type="PDB" id="5FJ8">
    <property type="method" value="EM"/>
    <property type="resolution" value="3.90 A"/>
    <property type="chains" value="J=1-70"/>
</dbReference>
<dbReference type="PDB" id="5FJ9">
    <property type="method" value="EM"/>
    <property type="resolution" value="4.60 A"/>
    <property type="chains" value="J=1-70"/>
</dbReference>
<dbReference type="PDB" id="5FJA">
    <property type="method" value="EM"/>
    <property type="resolution" value="4.65 A"/>
    <property type="chains" value="J=1-70"/>
</dbReference>
<dbReference type="PDB" id="5FMF">
    <property type="method" value="EM"/>
    <property type="resolution" value="6.00 A"/>
    <property type="chains" value="J=1-65"/>
</dbReference>
<dbReference type="PDB" id="5FYW">
    <property type="method" value="EM"/>
    <property type="resolution" value="4.35 A"/>
    <property type="chains" value="J=1-70"/>
</dbReference>
<dbReference type="PDB" id="5FZ5">
    <property type="method" value="EM"/>
    <property type="resolution" value="8.80 A"/>
    <property type="chains" value="J=1-70"/>
</dbReference>
<dbReference type="PDB" id="5G5L">
    <property type="method" value="EM"/>
    <property type="resolution" value="4.80 A"/>
    <property type="chains" value="J=1-70"/>
</dbReference>
<dbReference type="PDB" id="5IP7">
    <property type="method" value="X-ray"/>
    <property type="resolution" value="3.52 A"/>
    <property type="chains" value="J=1-65"/>
</dbReference>
<dbReference type="PDB" id="5IP9">
    <property type="method" value="X-ray"/>
    <property type="resolution" value="3.90 A"/>
    <property type="chains" value="J=1-65"/>
</dbReference>
<dbReference type="PDB" id="5LMX">
    <property type="method" value="EM"/>
    <property type="resolution" value="4.90 A"/>
    <property type="chains" value="J=1-70"/>
</dbReference>
<dbReference type="PDB" id="5M3F">
    <property type="method" value="EM"/>
    <property type="resolution" value="3.80 A"/>
    <property type="chains" value="J=1-70"/>
</dbReference>
<dbReference type="PDB" id="5M3M">
    <property type="method" value="EM"/>
    <property type="resolution" value="4.00 A"/>
    <property type="chains" value="J=1-70"/>
</dbReference>
<dbReference type="PDB" id="5M5W">
    <property type="method" value="EM"/>
    <property type="resolution" value="3.80 A"/>
    <property type="chains" value="J=1-70"/>
</dbReference>
<dbReference type="PDB" id="5M5X">
    <property type="method" value="EM"/>
    <property type="resolution" value="4.00 A"/>
    <property type="chains" value="J=1-70"/>
</dbReference>
<dbReference type="PDB" id="5M5Y">
    <property type="method" value="EM"/>
    <property type="resolution" value="4.00 A"/>
    <property type="chains" value="J=1-70"/>
</dbReference>
<dbReference type="PDB" id="5M64">
    <property type="method" value="EM"/>
    <property type="resolution" value="4.60 A"/>
    <property type="chains" value="J=1-70"/>
</dbReference>
<dbReference type="PDB" id="5N5Y">
    <property type="method" value="EM"/>
    <property type="resolution" value="7.70 A"/>
    <property type="chains" value="J=1-70"/>
</dbReference>
<dbReference type="PDB" id="5N5Z">
    <property type="method" value="EM"/>
    <property type="resolution" value="7.70 A"/>
    <property type="chains" value="J=1-70"/>
</dbReference>
<dbReference type="PDB" id="5N60">
    <property type="method" value="EM"/>
    <property type="resolution" value="7.70 A"/>
    <property type="chains" value="J=1-70"/>
</dbReference>
<dbReference type="PDB" id="5N61">
    <property type="method" value="EM"/>
    <property type="resolution" value="3.40 A"/>
    <property type="chains" value="J=1-70"/>
</dbReference>
<dbReference type="PDB" id="5OA1">
    <property type="method" value="EM"/>
    <property type="resolution" value="4.40 A"/>
    <property type="chains" value="J=1-70"/>
</dbReference>
<dbReference type="PDB" id="5OQJ">
    <property type="method" value="EM"/>
    <property type="resolution" value="4.70 A"/>
    <property type="chains" value="J=1-70"/>
</dbReference>
<dbReference type="PDB" id="5OQM">
    <property type="method" value="EM"/>
    <property type="resolution" value="5.80 A"/>
    <property type="chains" value="J=1-70"/>
</dbReference>
<dbReference type="PDB" id="5OT2">
    <property type="method" value="X-ray"/>
    <property type="resolution" value="3.20 A"/>
    <property type="chains" value="J=1-70"/>
</dbReference>
<dbReference type="PDB" id="5SVA">
    <property type="method" value="EM"/>
    <property type="resolution" value="15.30 A"/>
    <property type="chains" value="J=1-70"/>
</dbReference>
<dbReference type="PDB" id="5U5Q">
    <property type="method" value="X-ray"/>
    <property type="resolution" value="3.80 A"/>
    <property type="chains" value="J=1-70"/>
</dbReference>
<dbReference type="PDB" id="5VVR">
    <property type="method" value="EM"/>
    <property type="resolution" value="5.80 A"/>
    <property type="chains" value="J=1-70"/>
</dbReference>
<dbReference type="PDB" id="5VVS">
    <property type="method" value="EM"/>
    <property type="resolution" value="6.40 A"/>
    <property type="chains" value="J=1-70"/>
</dbReference>
<dbReference type="PDB" id="5W4U">
    <property type="method" value="X-ray"/>
    <property type="resolution" value="3.60 A"/>
    <property type="chains" value="J=1-70"/>
</dbReference>
<dbReference type="PDB" id="5W51">
    <property type="method" value="X-ray"/>
    <property type="resolution" value="3.40 A"/>
    <property type="chains" value="J=1-70"/>
</dbReference>
<dbReference type="PDB" id="5W5Y">
    <property type="method" value="EM"/>
    <property type="resolution" value="3.80 A"/>
    <property type="chains" value="J=1-70"/>
</dbReference>
<dbReference type="PDB" id="5W64">
    <property type="method" value="EM"/>
    <property type="resolution" value="4.20 A"/>
    <property type="chains" value="J=1-70"/>
</dbReference>
<dbReference type="PDB" id="5W65">
    <property type="method" value="EM"/>
    <property type="resolution" value="4.30 A"/>
    <property type="chains" value="J=1-70"/>
</dbReference>
<dbReference type="PDB" id="5W66">
    <property type="method" value="EM"/>
    <property type="resolution" value="3.90 A"/>
    <property type="chains" value="J=1-70"/>
</dbReference>
<dbReference type="PDB" id="6BLO">
    <property type="method" value="X-ray"/>
    <property type="resolution" value="3.40 A"/>
    <property type="chains" value="J=1-70"/>
</dbReference>
<dbReference type="PDB" id="6BLP">
    <property type="method" value="X-ray"/>
    <property type="resolution" value="3.20 A"/>
    <property type="chains" value="J=1-70"/>
</dbReference>
<dbReference type="PDB" id="6BM2">
    <property type="method" value="X-ray"/>
    <property type="resolution" value="3.40 A"/>
    <property type="chains" value="J=1-70"/>
</dbReference>
<dbReference type="PDB" id="6BM4">
    <property type="method" value="X-ray"/>
    <property type="resolution" value="2.95 A"/>
    <property type="chains" value="J=1-70"/>
</dbReference>
<dbReference type="PDB" id="6BQF">
    <property type="method" value="X-ray"/>
    <property type="resolution" value="3.35 A"/>
    <property type="chains" value="J=1-70"/>
</dbReference>
<dbReference type="PDB" id="6CNB">
    <property type="method" value="EM"/>
    <property type="resolution" value="4.10 A"/>
    <property type="chains" value="J=1-70"/>
</dbReference>
<dbReference type="PDB" id="6CNC">
    <property type="method" value="EM"/>
    <property type="resolution" value="4.10 A"/>
    <property type="chains" value="J=1-70"/>
</dbReference>
<dbReference type="PDB" id="6CND">
    <property type="method" value="EM"/>
    <property type="resolution" value="4.80 A"/>
    <property type="chains" value="J=1-70"/>
</dbReference>
<dbReference type="PDB" id="6CNF">
    <property type="method" value="EM"/>
    <property type="resolution" value="4.50 A"/>
    <property type="chains" value="J=1-70"/>
</dbReference>
<dbReference type="PDB" id="6EU0">
    <property type="method" value="EM"/>
    <property type="resolution" value="4.00 A"/>
    <property type="chains" value="J=1-70"/>
</dbReference>
<dbReference type="PDB" id="6EU1">
    <property type="method" value="EM"/>
    <property type="resolution" value="3.40 A"/>
    <property type="chains" value="J=1-70"/>
</dbReference>
<dbReference type="PDB" id="6EU2">
    <property type="method" value="EM"/>
    <property type="resolution" value="3.40 A"/>
    <property type="chains" value="J=1-70"/>
</dbReference>
<dbReference type="PDB" id="6EU3">
    <property type="method" value="EM"/>
    <property type="resolution" value="3.30 A"/>
    <property type="chains" value="J=1-70"/>
</dbReference>
<dbReference type="PDB" id="6F40">
    <property type="method" value="EM"/>
    <property type="resolution" value="3.70 A"/>
    <property type="chains" value="J=1-70"/>
</dbReference>
<dbReference type="PDB" id="6F41">
    <property type="method" value="EM"/>
    <property type="resolution" value="4.30 A"/>
    <property type="chains" value="J=1-70"/>
</dbReference>
<dbReference type="PDB" id="6F42">
    <property type="method" value="EM"/>
    <property type="resolution" value="5.50 A"/>
    <property type="chains" value="J=1-70"/>
</dbReference>
<dbReference type="PDB" id="6F44">
    <property type="method" value="EM"/>
    <property type="resolution" value="4.20 A"/>
    <property type="chains" value="J=1-70"/>
</dbReference>
<dbReference type="PDB" id="6GYK">
    <property type="method" value="EM"/>
    <property type="resolution" value="5.10 A"/>
    <property type="chains" value="J=1-70"/>
</dbReference>
<dbReference type="PDB" id="6GYL">
    <property type="method" value="EM"/>
    <property type="resolution" value="4.80 A"/>
    <property type="chains" value="J=1-70"/>
</dbReference>
<dbReference type="PDB" id="6GYM">
    <property type="method" value="EM"/>
    <property type="resolution" value="6.70 A"/>
    <property type="chains" value="J=1-70"/>
</dbReference>
<dbReference type="PDB" id="6H67">
    <property type="method" value="EM"/>
    <property type="resolution" value="3.60 A"/>
    <property type="chains" value="J=1-70"/>
</dbReference>
<dbReference type="PDB" id="6H68">
    <property type="method" value="EM"/>
    <property type="resolution" value="4.60 A"/>
    <property type="chains" value="J=1-70"/>
</dbReference>
<dbReference type="PDB" id="6HKO">
    <property type="method" value="EM"/>
    <property type="resolution" value="3.42 A"/>
    <property type="chains" value="J=1-70"/>
</dbReference>
<dbReference type="PDB" id="6HLQ">
    <property type="method" value="EM"/>
    <property type="resolution" value="3.18 A"/>
    <property type="chains" value="J=1-70"/>
</dbReference>
<dbReference type="PDB" id="6HLR">
    <property type="method" value="EM"/>
    <property type="resolution" value="3.18 A"/>
    <property type="chains" value="J=1-70"/>
</dbReference>
<dbReference type="PDB" id="6HLS">
    <property type="method" value="EM"/>
    <property type="resolution" value="3.21 A"/>
    <property type="chains" value="J=1-70"/>
</dbReference>
<dbReference type="PDB" id="6I84">
    <property type="method" value="EM"/>
    <property type="resolution" value="4.40 A"/>
    <property type="chains" value="J=1-70"/>
</dbReference>
<dbReference type="PDB" id="6O6C">
    <property type="method" value="EM"/>
    <property type="resolution" value="3.10 A"/>
    <property type="chains" value="H=1-70"/>
</dbReference>
<dbReference type="PDB" id="6RQH">
    <property type="method" value="EM"/>
    <property type="resolution" value="3.70 A"/>
    <property type="chains" value="J=1-70"/>
</dbReference>
<dbReference type="PDB" id="6RQL">
    <property type="method" value="EM"/>
    <property type="resolution" value="2.90 A"/>
    <property type="chains" value="J=1-70"/>
</dbReference>
<dbReference type="PDB" id="6RQT">
    <property type="method" value="EM"/>
    <property type="resolution" value="4.00 A"/>
    <property type="chains" value="J=1-70"/>
</dbReference>
<dbReference type="PDB" id="6RRD">
    <property type="method" value="EM"/>
    <property type="resolution" value="3.10 A"/>
    <property type="chains" value="J=1-70"/>
</dbReference>
<dbReference type="PDB" id="6RUI">
    <property type="method" value="EM"/>
    <property type="resolution" value="2.70 A"/>
    <property type="chains" value="J=1-70"/>
</dbReference>
<dbReference type="PDB" id="6RUO">
    <property type="method" value="EM"/>
    <property type="resolution" value="3.50 A"/>
    <property type="chains" value="J=1-70"/>
</dbReference>
<dbReference type="PDB" id="6RWE">
    <property type="method" value="EM"/>
    <property type="resolution" value="3.00 A"/>
    <property type="chains" value="J=1-70"/>
</dbReference>
<dbReference type="PDB" id="6TPS">
    <property type="method" value="EM"/>
    <property type="resolution" value="3.54 A"/>
    <property type="chains" value="J=1-70"/>
</dbReference>
<dbReference type="PDB" id="6TUT">
    <property type="method" value="EM"/>
    <property type="resolution" value="3.25 A"/>
    <property type="chains" value="J=1-70"/>
</dbReference>
<dbReference type="PDB" id="6UPX">
    <property type="method" value="X-ray"/>
    <property type="resolution" value="3.40 A"/>
    <property type="chains" value="J=1-70"/>
</dbReference>
<dbReference type="PDB" id="6UPY">
    <property type="method" value="X-ray"/>
    <property type="resolution" value="3.40 A"/>
    <property type="chains" value="J=1-70"/>
</dbReference>
<dbReference type="PDB" id="6UPZ">
    <property type="method" value="X-ray"/>
    <property type="resolution" value="3.10 A"/>
    <property type="chains" value="J=1-70"/>
</dbReference>
<dbReference type="PDB" id="6UQ0">
    <property type="method" value="X-ray"/>
    <property type="resolution" value="3.56 A"/>
    <property type="chains" value="J=1-70"/>
</dbReference>
<dbReference type="PDB" id="6UQ1">
    <property type="method" value="X-ray"/>
    <property type="resolution" value="3.60 A"/>
    <property type="chains" value="J=1-70"/>
</dbReference>
<dbReference type="PDB" id="6UQ2">
    <property type="method" value="X-ray"/>
    <property type="resolution" value="3.20 A"/>
    <property type="chains" value="J=1-70"/>
</dbReference>
<dbReference type="PDB" id="6UQ3">
    <property type="method" value="X-ray"/>
    <property type="resolution" value="3.47 A"/>
    <property type="chains" value="J=1-70"/>
</dbReference>
<dbReference type="PDB" id="7KED">
    <property type="method" value="X-ray"/>
    <property type="resolution" value="3.60 A"/>
    <property type="chains" value="J=1-70"/>
</dbReference>
<dbReference type="PDB" id="7KEE">
    <property type="method" value="X-ray"/>
    <property type="resolution" value="3.45 A"/>
    <property type="chains" value="J=1-70"/>
</dbReference>
<dbReference type="PDB" id="7KEF">
    <property type="method" value="X-ray"/>
    <property type="resolution" value="3.89 A"/>
    <property type="chains" value="J=1-70"/>
</dbReference>
<dbReference type="PDB" id="7MEI">
    <property type="method" value="EM"/>
    <property type="resolution" value="3.54 A"/>
    <property type="chains" value="J/j=1-70"/>
</dbReference>
<dbReference type="PDB" id="7MK9">
    <property type="method" value="EM"/>
    <property type="resolution" value="3.54 A"/>
    <property type="chains" value="J=1-70"/>
</dbReference>
<dbReference type="PDB" id="7MKA">
    <property type="method" value="EM"/>
    <property type="resolution" value="3.54 A"/>
    <property type="chains" value="j=1-70"/>
</dbReference>
<dbReference type="PDB" id="7ML0">
    <property type="method" value="EM"/>
    <property type="resolution" value="3.00 A"/>
    <property type="chains" value="J=1-70"/>
</dbReference>
<dbReference type="PDB" id="7ML1">
    <property type="method" value="EM"/>
    <property type="resolution" value="4.00 A"/>
    <property type="chains" value="J=1-70"/>
</dbReference>
<dbReference type="PDB" id="7ML2">
    <property type="method" value="EM"/>
    <property type="resolution" value="3.40 A"/>
    <property type="chains" value="J=1-70"/>
</dbReference>
<dbReference type="PDB" id="7ML4">
    <property type="method" value="EM"/>
    <property type="resolution" value="3.10 A"/>
    <property type="chains" value="J=1-70"/>
</dbReference>
<dbReference type="PDB" id="7NKX">
    <property type="method" value="EM"/>
    <property type="resolution" value="2.90 A"/>
    <property type="chains" value="J=1-70"/>
</dbReference>
<dbReference type="PDB" id="7NKY">
    <property type="method" value="EM"/>
    <property type="resolution" value="3.20 A"/>
    <property type="chains" value="J=1-70"/>
</dbReference>
<dbReference type="PDB" id="7O4I">
    <property type="method" value="EM"/>
    <property type="resolution" value="3.20 A"/>
    <property type="chains" value="J=1-70"/>
</dbReference>
<dbReference type="PDB" id="7O4J">
    <property type="method" value="EM"/>
    <property type="resolution" value="2.90 A"/>
    <property type="chains" value="J=1-70"/>
</dbReference>
<dbReference type="PDB" id="7O72">
    <property type="method" value="EM"/>
    <property type="resolution" value="3.40 A"/>
    <property type="chains" value="J=1-70"/>
</dbReference>
<dbReference type="PDB" id="7O73">
    <property type="method" value="EM"/>
    <property type="resolution" value="3.40 A"/>
    <property type="chains" value="J=1-70"/>
</dbReference>
<dbReference type="PDB" id="7O75">
    <property type="method" value="EM"/>
    <property type="resolution" value="3.20 A"/>
    <property type="chains" value="J=1-70"/>
</dbReference>
<dbReference type="PDB" id="7RIM">
    <property type="method" value="X-ray"/>
    <property type="resolution" value="2.90 A"/>
    <property type="chains" value="J=1-70"/>
</dbReference>
<dbReference type="PDB" id="7RIP">
    <property type="method" value="X-ray"/>
    <property type="resolution" value="3.30 A"/>
    <property type="chains" value="J=1-70"/>
</dbReference>
<dbReference type="PDB" id="7RIQ">
    <property type="method" value="X-ray"/>
    <property type="resolution" value="3.00 A"/>
    <property type="chains" value="J=1-70"/>
</dbReference>
<dbReference type="PDB" id="7RIW">
    <property type="method" value="X-ray"/>
    <property type="resolution" value="3.20 A"/>
    <property type="chains" value="J=1-70"/>
</dbReference>
<dbReference type="PDB" id="7RIX">
    <property type="method" value="X-ray"/>
    <property type="resolution" value="3.40 A"/>
    <property type="chains" value="J=1-70"/>
</dbReference>
<dbReference type="PDB" id="7RIY">
    <property type="method" value="X-ray"/>
    <property type="resolution" value="3.70 A"/>
    <property type="chains" value="J=1-70"/>
</dbReference>
<dbReference type="PDB" id="7UI9">
    <property type="method" value="EM"/>
    <property type="resolution" value="3.30 A"/>
    <property type="chains" value="J=1-70"/>
</dbReference>
<dbReference type="PDB" id="7UIF">
    <property type="method" value="EM"/>
    <property type="resolution" value="4.60 A"/>
    <property type="chains" value="J=1-70"/>
</dbReference>
<dbReference type="PDB" id="7UIO">
    <property type="method" value="EM"/>
    <property type="resolution" value="3.30 A"/>
    <property type="chains" value="AJ/BJ=1-70"/>
</dbReference>
<dbReference type="PDB" id="7Z0H">
    <property type="method" value="EM"/>
    <property type="resolution" value="2.60 A"/>
    <property type="chains" value="J=1-70"/>
</dbReference>
<dbReference type="PDB" id="7Z1L">
    <property type="method" value="EM"/>
    <property type="resolution" value="2.80 A"/>
    <property type="chains" value="J=1-70"/>
</dbReference>
<dbReference type="PDB" id="7Z1M">
    <property type="method" value="EM"/>
    <property type="resolution" value="3.40 A"/>
    <property type="chains" value="J=1-70"/>
</dbReference>
<dbReference type="PDB" id="7Z1N">
    <property type="method" value="EM"/>
    <property type="resolution" value="3.90 A"/>
    <property type="chains" value="J=1-70"/>
</dbReference>
<dbReference type="PDB" id="7Z1O">
    <property type="method" value="EM"/>
    <property type="resolution" value="2.70 A"/>
    <property type="chains" value="J=1-70"/>
</dbReference>
<dbReference type="PDB" id="7Z2Z">
    <property type="method" value="EM"/>
    <property type="resolution" value="3.07 A"/>
    <property type="chains" value="J=1-70"/>
</dbReference>
<dbReference type="PDB" id="7Z30">
    <property type="method" value="EM"/>
    <property type="resolution" value="2.90 A"/>
    <property type="chains" value="J=1-70"/>
</dbReference>
<dbReference type="PDB" id="7Z31">
    <property type="method" value="EM"/>
    <property type="resolution" value="2.76 A"/>
    <property type="chains" value="J=1-70"/>
</dbReference>
<dbReference type="PDB" id="7ZS9">
    <property type="method" value="EM"/>
    <property type="resolution" value="3.10 A"/>
    <property type="chains" value="J=1-70"/>
</dbReference>
<dbReference type="PDB" id="7ZSA">
    <property type="method" value="EM"/>
    <property type="resolution" value="4.00 A"/>
    <property type="chains" value="J=1-70"/>
</dbReference>
<dbReference type="PDB" id="7ZSB">
    <property type="method" value="EM"/>
    <property type="resolution" value="6.60 A"/>
    <property type="chains" value="J=1-70"/>
</dbReference>
<dbReference type="PDB" id="8BWS">
    <property type="method" value="EM"/>
    <property type="resolution" value="3.20 A"/>
    <property type="chains" value="J=1-70"/>
</dbReference>
<dbReference type="PDB" id="8CEN">
    <property type="method" value="EM"/>
    <property type="resolution" value="3.00 A"/>
    <property type="chains" value="J=1-70"/>
</dbReference>
<dbReference type="PDB" id="8CEO">
    <property type="method" value="EM"/>
    <property type="resolution" value="3.60 A"/>
    <property type="chains" value="J=1-70"/>
</dbReference>
<dbReference type="PDB" id="8JCH">
    <property type="method" value="EM"/>
    <property type="resolution" value="2.70 A"/>
    <property type="chains" value="J=1-70"/>
</dbReference>
<dbReference type="PDB" id="8K5P">
    <property type="method" value="EM"/>
    <property type="resolution" value="2.80 A"/>
    <property type="chains" value="J=1-70"/>
</dbReference>
<dbReference type="PDB" id="8RAM">
    <property type="method" value="EM"/>
    <property type="resolution" value="2.80 A"/>
    <property type="chains" value="J=1-70"/>
</dbReference>
<dbReference type="PDB" id="8RAP">
    <property type="method" value="EM"/>
    <property type="resolution" value="4.30 A"/>
    <property type="chains" value="J=1-70"/>
</dbReference>
<dbReference type="PDB" id="8TUG">
    <property type="method" value="EM"/>
    <property type="resolution" value="3.50 A"/>
    <property type="chains" value="J=1-70"/>
</dbReference>
<dbReference type="PDB" id="8TVP">
    <property type="method" value="EM"/>
    <property type="resolution" value="3.70 A"/>
    <property type="chains" value="J=1-70"/>
</dbReference>
<dbReference type="PDB" id="8TVQ">
    <property type="method" value="EM"/>
    <property type="resolution" value="4.60 A"/>
    <property type="chains" value="J=1-70"/>
</dbReference>
<dbReference type="PDB" id="8TVS">
    <property type="method" value="EM"/>
    <property type="resolution" value="4.40 A"/>
    <property type="chains" value="J=1-70"/>
</dbReference>
<dbReference type="PDB" id="8TVV">
    <property type="method" value="EM"/>
    <property type="resolution" value="3.70 A"/>
    <property type="chains" value="J=1-70"/>
</dbReference>
<dbReference type="PDB" id="8TVW">
    <property type="method" value="EM"/>
    <property type="resolution" value="3.60 A"/>
    <property type="chains" value="J=1-70"/>
</dbReference>
<dbReference type="PDB" id="8TVX">
    <property type="method" value="EM"/>
    <property type="resolution" value="3.70 A"/>
    <property type="chains" value="J=1-70"/>
</dbReference>
<dbReference type="PDB" id="8TVY">
    <property type="method" value="EM"/>
    <property type="resolution" value="3.10 A"/>
    <property type="chains" value="J=1-70"/>
</dbReference>
<dbReference type="PDB" id="8UKQ">
    <property type="method" value="X-ray"/>
    <property type="resolution" value="3.50 A"/>
    <property type="chains" value="J=1-70"/>
</dbReference>
<dbReference type="PDB" id="8UKR">
    <property type="method" value="X-ray"/>
    <property type="resolution" value="3.78 A"/>
    <property type="chains" value="J=1-70"/>
</dbReference>
<dbReference type="PDB" id="8UKS">
    <property type="method" value="X-ray"/>
    <property type="resolution" value="3.40 A"/>
    <property type="chains" value="J=1-70"/>
</dbReference>
<dbReference type="PDB" id="8UKT">
    <property type="method" value="X-ray"/>
    <property type="resolution" value="3.60 A"/>
    <property type="chains" value="J=1-70"/>
</dbReference>
<dbReference type="PDB" id="8UKU">
    <property type="method" value="X-ray"/>
    <property type="resolution" value="3.60 A"/>
    <property type="chains" value="J=1-70"/>
</dbReference>
<dbReference type="PDB" id="8UMH">
    <property type="method" value="EM"/>
    <property type="resolution" value="4.10 A"/>
    <property type="chains" value="J=1-70"/>
</dbReference>
<dbReference type="PDB" id="8UMI">
    <property type="method" value="EM"/>
    <property type="resolution" value="3.70 A"/>
    <property type="chains" value="J=1-70"/>
</dbReference>
<dbReference type="PDB" id="8UOQ">
    <property type="method" value="EM"/>
    <property type="resolution" value="3.80 A"/>
    <property type="chains" value="J=1-70"/>
</dbReference>
<dbReference type="PDB" id="8UOT">
    <property type="method" value="EM"/>
    <property type="resolution" value="3.70 A"/>
    <property type="chains" value="J=1-70"/>
</dbReference>
<dbReference type="PDB" id="9BVT">
    <property type="method" value="X-ray"/>
    <property type="resolution" value="3.40 A"/>
    <property type="chains" value="J=1-70"/>
</dbReference>
<dbReference type="PDB" id="9BW0">
    <property type="method" value="X-ray"/>
    <property type="resolution" value="3.51 A"/>
    <property type="chains" value="J=1-70"/>
</dbReference>
<dbReference type="PDB" id="9JA1">
    <property type="method" value="EM"/>
    <property type="resolution" value="2.98 A"/>
    <property type="chains" value="J=1-70"/>
</dbReference>
<dbReference type="PDBsum" id="1I3Q"/>
<dbReference type="PDBsum" id="1I50"/>
<dbReference type="PDBsum" id="1I6H"/>
<dbReference type="PDBsum" id="1K83"/>
<dbReference type="PDBsum" id="1NIK"/>
<dbReference type="PDBsum" id="1NT9"/>
<dbReference type="PDBsum" id="1PQV"/>
<dbReference type="PDBsum" id="1R5U"/>
<dbReference type="PDBsum" id="1R9S"/>
<dbReference type="PDBsum" id="1R9T"/>
<dbReference type="PDBsum" id="1SFO"/>
<dbReference type="PDBsum" id="1TWA"/>
<dbReference type="PDBsum" id="1TWC"/>
<dbReference type="PDBsum" id="1TWF"/>
<dbReference type="PDBsum" id="1TWG"/>
<dbReference type="PDBsum" id="1TWH"/>
<dbReference type="PDBsum" id="1WCM"/>
<dbReference type="PDBsum" id="1Y1V"/>
<dbReference type="PDBsum" id="1Y1W"/>
<dbReference type="PDBsum" id="1Y1Y"/>
<dbReference type="PDBsum" id="1Y77"/>
<dbReference type="PDBsum" id="2B63"/>
<dbReference type="PDBsum" id="2B8K"/>
<dbReference type="PDBsum" id="2E2H"/>
<dbReference type="PDBsum" id="2E2I"/>
<dbReference type="PDBsum" id="2E2J"/>
<dbReference type="PDBsum" id="2JA5"/>
<dbReference type="PDBsum" id="2JA6"/>
<dbReference type="PDBsum" id="2JA7"/>
<dbReference type="PDBsum" id="2JA8"/>
<dbReference type="PDBsum" id="2NVQ"/>
<dbReference type="PDBsum" id="2NVT"/>
<dbReference type="PDBsum" id="2NVX"/>
<dbReference type="PDBsum" id="2NVY"/>
<dbReference type="PDBsum" id="2NVZ"/>
<dbReference type="PDBsum" id="2R7Z"/>
<dbReference type="PDBsum" id="2R92"/>
<dbReference type="PDBsum" id="2R93"/>
<dbReference type="PDBsum" id="2VUM"/>
<dbReference type="PDBsum" id="2YU9"/>
<dbReference type="PDBsum" id="3CQZ"/>
<dbReference type="PDBsum" id="3FKI"/>
<dbReference type="PDBsum" id="3GTG"/>
<dbReference type="PDBsum" id="3GTJ"/>
<dbReference type="PDBsum" id="3GTK"/>
<dbReference type="PDBsum" id="3GTL"/>
<dbReference type="PDBsum" id="3GTM"/>
<dbReference type="PDBsum" id="3GTO"/>
<dbReference type="PDBsum" id="3GTP"/>
<dbReference type="PDBsum" id="3GTQ"/>
<dbReference type="PDBsum" id="3H3V"/>
<dbReference type="PDBsum" id="3HOU"/>
<dbReference type="PDBsum" id="3HOV"/>
<dbReference type="PDBsum" id="3HOW"/>
<dbReference type="PDBsum" id="3HOX"/>
<dbReference type="PDBsum" id="3HOY"/>
<dbReference type="PDBsum" id="3HOZ"/>
<dbReference type="PDBsum" id="3I4M"/>
<dbReference type="PDBsum" id="3I4N"/>
<dbReference type="PDBsum" id="3J0K"/>
<dbReference type="PDBsum" id="3J1N"/>
<dbReference type="PDBsum" id="3K1F"/>
<dbReference type="PDBsum" id="3K7A"/>
<dbReference type="PDBsum" id="3M3Y"/>
<dbReference type="PDBsum" id="3M4O"/>
<dbReference type="PDBsum" id="3PO2"/>
<dbReference type="PDBsum" id="3PO3"/>
<dbReference type="PDBsum" id="3QT1"/>
<dbReference type="PDBsum" id="3RZD"/>
<dbReference type="PDBsum" id="3RZO"/>
<dbReference type="PDBsum" id="3S14"/>
<dbReference type="PDBsum" id="3S15"/>
<dbReference type="PDBsum" id="3S16"/>
<dbReference type="PDBsum" id="3S17"/>
<dbReference type="PDBsum" id="3S1M"/>
<dbReference type="PDBsum" id="3S1N"/>
<dbReference type="PDBsum" id="3S1Q"/>
<dbReference type="PDBsum" id="3S1R"/>
<dbReference type="PDBsum" id="3S2D"/>
<dbReference type="PDBsum" id="3S2H"/>
<dbReference type="PDBsum" id="4A3B"/>
<dbReference type="PDBsum" id="4A3C"/>
<dbReference type="PDBsum" id="4A3D"/>
<dbReference type="PDBsum" id="4A3E"/>
<dbReference type="PDBsum" id="4A3F"/>
<dbReference type="PDBsum" id="4A3G"/>
<dbReference type="PDBsum" id="4A3I"/>
<dbReference type="PDBsum" id="4A3J"/>
<dbReference type="PDBsum" id="4A3K"/>
<dbReference type="PDBsum" id="4A3L"/>
<dbReference type="PDBsum" id="4A3M"/>
<dbReference type="PDBsum" id="4A93"/>
<dbReference type="PDBsum" id="4BBR"/>
<dbReference type="PDBsum" id="4BBS"/>
<dbReference type="PDBsum" id="4BXX"/>
<dbReference type="PDBsum" id="4BXZ"/>
<dbReference type="PDBsum" id="4BY1"/>
<dbReference type="PDBsum" id="4BY7"/>
<dbReference type="PDBsum" id="4C2M"/>
<dbReference type="PDBsum" id="4C3H"/>
<dbReference type="PDBsum" id="4C3I"/>
<dbReference type="PDBsum" id="4C3J"/>
<dbReference type="PDBsum" id="4V1M"/>
<dbReference type="PDBsum" id="4V1N"/>
<dbReference type="PDBsum" id="4V1O"/>
<dbReference type="PDBsum" id="4X67"/>
<dbReference type="PDBsum" id="4X6A"/>
<dbReference type="PDBsum" id="4Y52"/>
<dbReference type="PDBsum" id="4Y7N"/>
<dbReference type="PDBsum" id="4YM7"/>
<dbReference type="PDBsum" id="5C3E"/>
<dbReference type="PDBsum" id="5C44"/>
<dbReference type="PDBsum" id="5C4A"/>
<dbReference type="PDBsum" id="5C4J"/>
<dbReference type="PDBsum" id="5C4X"/>
<dbReference type="PDBsum" id="5FJ8"/>
<dbReference type="PDBsum" id="5FJ9"/>
<dbReference type="PDBsum" id="5FJA"/>
<dbReference type="PDBsum" id="5FMF"/>
<dbReference type="PDBsum" id="5FYW"/>
<dbReference type="PDBsum" id="5FZ5"/>
<dbReference type="PDBsum" id="5G5L"/>
<dbReference type="PDBsum" id="5IP7"/>
<dbReference type="PDBsum" id="5IP9"/>
<dbReference type="PDBsum" id="5LMX"/>
<dbReference type="PDBsum" id="5M3F"/>
<dbReference type="PDBsum" id="5M3M"/>
<dbReference type="PDBsum" id="5M5W"/>
<dbReference type="PDBsum" id="5M5X"/>
<dbReference type="PDBsum" id="5M5Y"/>
<dbReference type="PDBsum" id="5M64"/>
<dbReference type="PDBsum" id="5N5Y"/>
<dbReference type="PDBsum" id="5N5Z"/>
<dbReference type="PDBsum" id="5N60"/>
<dbReference type="PDBsum" id="5N61"/>
<dbReference type="PDBsum" id="5OA1"/>
<dbReference type="PDBsum" id="5OQJ"/>
<dbReference type="PDBsum" id="5OQM"/>
<dbReference type="PDBsum" id="5OT2"/>
<dbReference type="PDBsum" id="5SVA"/>
<dbReference type="PDBsum" id="5U5Q"/>
<dbReference type="PDBsum" id="5VVR"/>
<dbReference type="PDBsum" id="5VVS"/>
<dbReference type="PDBsum" id="5W4U"/>
<dbReference type="PDBsum" id="5W51"/>
<dbReference type="PDBsum" id="5W5Y"/>
<dbReference type="PDBsum" id="5W64"/>
<dbReference type="PDBsum" id="5W65"/>
<dbReference type="PDBsum" id="5W66"/>
<dbReference type="PDBsum" id="6BLO"/>
<dbReference type="PDBsum" id="6BLP"/>
<dbReference type="PDBsum" id="6BM2"/>
<dbReference type="PDBsum" id="6BM4"/>
<dbReference type="PDBsum" id="6BQF"/>
<dbReference type="PDBsum" id="6CNB"/>
<dbReference type="PDBsum" id="6CNC"/>
<dbReference type="PDBsum" id="6CND"/>
<dbReference type="PDBsum" id="6CNF"/>
<dbReference type="PDBsum" id="6EU0"/>
<dbReference type="PDBsum" id="6EU1"/>
<dbReference type="PDBsum" id="6EU2"/>
<dbReference type="PDBsum" id="6EU3"/>
<dbReference type="PDBsum" id="6F40"/>
<dbReference type="PDBsum" id="6F41"/>
<dbReference type="PDBsum" id="6F42"/>
<dbReference type="PDBsum" id="6F44"/>
<dbReference type="PDBsum" id="6GYK"/>
<dbReference type="PDBsum" id="6GYL"/>
<dbReference type="PDBsum" id="6GYM"/>
<dbReference type="PDBsum" id="6H67"/>
<dbReference type="PDBsum" id="6H68"/>
<dbReference type="PDBsum" id="6HKO"/>
<dbReference type="PDBsum" id="6HLQ"/>
<dbReference type="PDBsum" id="6HLR"/>
<dbReference type="PDBsum" id="6HLS"/>
<dbReference type="PDBsum" id="6I84"/>
<dbReference type="PDBsum" id="6O6C"/>
<dbReference type="PDBsum" id="6RQH"/>
<dbReference type="PDBsum" id="6RQL"/>
<dbReference type="PDBsum" id="6RQT"/>
<dbReference type="PDBsum" id="6RRD"/>
<dbReference type="PDBsum" id="6RUI"/>
<dbReference type="PDBsum" id="6RUO"/>
<dbReference type="PDBsum" id="6RWE"/>
<dbReference type="PDBsum" id="6TPS"/>
<dbReference type="PDBsum" id="6TUT"/>
<dbReference type="PDBsum" id="6UPX"/>
<dbReference type="PDBsum" id="6UPY"/>
<dbReference type="PDBsum" id="6UPZ"/>
<dbReference type="PDBsum" id="6UQ0"/>
<dbReference type="PDBsum" id="6UQ1"/>
<dbReference type="PDBsum" id="6UQ2"/>
<dbReference type="PDBsum" id="6UQ3"/>
<dbReference type="PDBsum" id="7KED"/>
<dbReference type="PDBsum" id="7KEE"/>
<dbReference type="PDBsum" id="7KEF"/>
<dbReference type="PDBsum" id="7MEI"/>
<dbReference type="PDBsum" id="7MK9"/>
<dbReference type="PDBsum" id="7MKA"/>
<dbReference type="PDBsum" id="7ML0"/>
<dbReference type="PDBsum" id="7ML1"/>
<dbReference type="PDBsum" id="7ML2"/>
<dbReference type="PDBsum" id="7ML4"/>
<dbReference type="PDBsum" id="7NKX"/>
<dbReference type="PDBsum" id="7NKY"/>
<dbReference type="PDBsum" id="7O4I"/>
<dbReference type="PDBsum" id="7O4J"/>
<dbReference type="PDBsum" id="7O72"/>
<dbReference type="PDBsum" id="7O73"/>
<dbReference type="PDBsum" id="7O75"/>
<dbReference type="PDBsum" id="7RIM"/>
<dbReference type="PDBsum" id="7RIP"/>
<dbReference type="PDBsum" id="7RIQ"/>
<dbReference type="PDBsum" id="7RIW"/>
<dbReference type="PDBsum" id="7RIX"/>
<dbReference type="PDBsum" id="7RIY"/>
<dbReference type="PDBsum" id="7UI9"/>
<dbReference type="PDBsum" id="7UIF"/>
<dbReference type="PDBsum" id="7UIO"/>
<dbReference type="PDBsum" id="7Z0H"/>
<dbReference type="PDBsum" id="7Z1L"/>
<dbReference type="PDBsum" id="7Z1M"/>
<dbReference type="PDBsum" id="7Z1N"/>
<dbReference type="PDBsum" id="7Z1O"/>
<dbReference type="PDBsum" id="7Z2Z"/>
<dbReference type="PDBsum" id="7Z30"/>
<dbReference type="PDBsum" id="7Z31"/>
<dbReference type="PDBsum" id="7ZS9"/>
<dbReference type="PDBsum" id="7ZSA"/>
<dbReference type="PDBsum" id="7ZSB"/>
<dbReference type="PDBsum" id="8BWS"/>
<dbReference type="PDBsum" id="8CEN"/>
<dbReference type="PDBsum" id="8CEO"/>
<dbReference type="PDBsum" id="8JCH"/>
<dbReference type="PDBsum" id="8K5P"/>
<dbReference type="PDBsum" id="8RAM"/>
<dbReference type="PDBsum" id="8RAP"/>
<dbReference type="PDBsum" id="8TUG"/>
<dbReference type="PDBsum" id="8TVP"/>
<dbReference type="PDBsum" id="8TVQ"/>
<dbReference type="PDBsum" id="8TVS"/>
<dbReference type="PDBsum" id="8TVV"/>
<dbReference type="PDBsum" id="8TVW"/>
<dbReference type="PDBsum" id="8TVX"/>
<dbReference type="PDBsum" id="8TVY"/>
<dbReference type="PDBsum" id="8UKQ"/>
<dbReference type="PDBsum" id="8UKR"/>
<dbReference type="PDBsum" id="8UKS"/>
<dbReference type="PDBsum" id="8UKT"/>
<dbReference type="PDBsum" id="8UKU"/>
<dbReference type="PDBsum" id="8UMH"/>
<dbReference type="PDBsum" id="8UMI"/>
<dbReference type="PDBsum" id="8UOQ"/>
<dbReference type="PDBsum" id="8UOT"/>
<dbReference type="PDBsum" id="9BVT"/>
<dbReference type="PDBsum" id="9BW0"/>
<dbReference type="PDBsum" id="9JA1"/>
<dbReference type="EMDB" id="EMD-0090"/>
<dbReference type="EMDB" id="EMD-0091"/>
<dbReference type="EMDB" id="EMD-0092"/>
<dbReference type="EMDB" id="EMD-0146"/>
<dbReference type="EMDB" id="EMD-0147"/>
<dbReference type="EMDB" id="EMD-0238"/>
<dbReference type="EMDB" id="EMD-0239"/>
<dbReference type="EMDB" id="EMD-0240"/>
<dbReference type="EMDB" id="EMD-0241"/>
<dbReference type="EMDB" id="EMD-0633"/>
<dbReference type="EMDB" id="EMD-10006"/>
<dbReference type="EMDB" id="EMD-10007"/>
<dbReference type="EMDB" id="EMD-10038"/>
<dbReference type="EMDB" id="EMD-10544"/>
<dbReference type="EMDB" id="EMD-10595"/>
<dbReference type="EMDB" id="EMD-12449"/>
<dbReference type="EMDB" id="EMD-12450"/>
<dbReference type="EMDB" id="EMD-12719"/>
<dbReference type="EMDB" id="EMD-12720"/>
<dbReference type="EMDB" id="EMD-12743"/>
<dbReference type="EMDB" id="EMD-12744"/>
<dbReference type="EMDB" id="EMD-12745"/>
<dbReference type="EMDB" id="EMD-14421"/>
<dbReference type="EMDB" id="EMD-14447"/>
<dbReference type="EMDB" id="EMD-14448"/>
<dbReference type="EMDB" id="EMD-14449"/>
<dbReference type="EMDB" id="EMD-14451"/>
<dbReference type="EMDB" id="EMD-14468"/>
<dbReference type="EMDB" id="EMD-14469"/>
<dbReference type="EMDB" id="EMD-14470"/>
<dbReference type="EMDB" id="EMD-14927"/>
<dbReference type="EMDB" id="EMD-14928"/>
<dbReference type="EMDB" id="EMD-14929"/>
<dbReference type="EMDB" id="EMD-16299"/>
<dbReference type="EMDB" id="EMD-16610"/>
<dbReference type="EMDB" id="EMD-16611"/>
<dbReference type="EMDB" id="EMD-19019"/>
<dbReference type="EMDB" id="EMD-19022"/>
<dbReference type="EMDB" id="EMD-26542"/>
<dbReference type="EMDB" id="EMD-26544"/>
<dbReference type="EMDB" id="EMD-26551"/>
<dbReference type="EMDB" id="EMD-2784"/>
<dbReference type="EMDB" id="EMD-2785"/>
<dbReference type="EMDB" id="EMD-2786"/>
<dbReference type="EMDB" id="EMD-3446"/>
<dbReference type="EMDB" id="EMD-3447"/>
<dbReference type="EMDB" id="EMD-3448"/>
<dbReference type="EMDB" id="EMD-3449"/>
<dbReference type="EMDB" id="EMD-3590"/>
<dbReference type="EMDB" id="EMD-3591"/>
<dbReference type="EMDB" id="EMD-3592"/>
<dbReference type="EMDB" id="EMD-3593"/>
<dbReference type="EMDB" id="EMD-36162"/>
<dbReference type="EMDB" id="EMD-36908"/>
<dbReference type="EMDB" id="EMD-3727"/>
<dbReference type="EMDB" id="EMD-3846"/>
<dbReference type="EMDB" id="EMD-3850"/>
<dbReference type="EMDB" id="EMD-3955"/>
<dbReference type="EMDB" id="EMD-3956"/>
<dbReference type="EMDB" id="EMD-3957"/>
<dbReference type="EMDB" id="EMD-3958"/>
<dbReference type="EMDB" id="EMD-4088"/>
<dbReference type="EMDB" id="EMD-4147"/>
<dbReference type="EMDB" id="EMD-4148"/>
<dbReference type="EMDB" id="EMD-4180"/>
<dbReference type="EMDB" id="EMD-4181"/>
<dbReference type="EMDB" id="EMD-4182"/>
<dbReference type="EMDB" id="EMD-4183"/>
<dbReference type="EMDB" id="EMD-42437"/>
<dbReference type="EMDB" id="EMD-42438"/>
<dbReference type="EMDB" id="EMD-4429"/>
<dbReference type="EMDB" id="EMD-4982"/>
<dbReference type="EMDB" id="EMD-4984"/>
<dbReference type="EMDB" id="EMD-4985"/>
<dbReference type="EMDB" id="EMD-4987"/>
<dbReference type="EMDB" id="EMD-61287"/>
<dbReference type="EMDB" id="EMD-7530"/>
<dbReference type="EMDB" id="EMD-7531"/>
<dbReference type="EMDB" id="EMD-7532"/>
<dbReference type="EMDB" id="EMD-7533"/>
<dbReference type="EMDB" id="EMD-8735"/>
<dbReference type="EMDB" id="EMD-8737"/>
<dbReference type="EMDB" id="EMD-8771"/>
<dbReference type="EMDB" id="EMD-8773"/>
<dbReference type="EMDB" id="EMD-8774"/>
<dbReference type="EMDB" id="EMD-8775"/>
<dbReference type="EMDB" id="EMD-8776"/>
<dbReference type="EMDB" id="EMD-8777"/>
<dbReference type="SMR" id="P22139"/>
<dbReference type="BioGRID" id="34605">
    <property type="interactions" value="466"/>
</dbReference>
<dbReference type="ComplexPortal" id="CPX-1664">
    <property type="entry name" value="DNA-directed RNA Polymerase I complex"/>
</dbReference>
<dbReference type="ComplexPortal" id="CPX-2660">
    <property type="entry name" value="DNA-directed RNA polymerase III complex"/>
</dbReference>
<dbReference type="ComplexPortal" id="CPX-2662">
    <property type="entry name" value="DNA-directed RNA polymerase II complex"/>
</dbReference>
<dbReference type="DIP" id="DIP-825N"/>
<dbReference type="FunCoup" id="P22139">
    <property type="interactions" value="683"/>
</dbReference>
<dbReference type="IntAct" id="P22139">
    <property type="interactions" value="62"/>
</dbReference>
<dbReference type="MINT" id="P22139"/>
<dbReference type="STRING" id="4932.YOR210W"/>
<dbReference type="iPTMnet" id="P22139"/>
<dbReference type="PaxDb" id="4932-YOR210W"/>
<dbReference type="PeptideAtlas" id="P22139"/>
<dbReference type="EnsemblFungi" id="YOR210W_mRNA">
    <property type="protein sequence ID" value="YOR210W"/>
    <property type="gene ID" value="YOR210W"/>
</dbReference>
<dbReference type="GeneID" id="854385"/>
<dbReference type="KEGG" id="sce:YOR210W"/>
<dbReference type="AGR" id="SGD:S000005736"/>
<dbReference type="SGD" id="S000005736">
    <property type="gene designation" value="RPB10"/>
</dbReference>
<dbReference type="VEuPathDB" id="FungiDB:YOR210W"/>
<dbReference type="eggNOG" id="KOG3497">
    <property type="taxonomic scope" value="Eukaryota"/>
</dbReference>
<dbReference type="GeneTree" id="ENSGT00390000007087"/>
<dbReference type="HOGENOM" id="CLU_143122_2_1_1"/>
<dbReference type="InParanoid" id="P22139"/>
<dbReference type="OMA" id="YCCRRMF"/>
<dbReference type="OrthoDB" id="10258858at2759"/>
<dbReference type="BioCyc" id="YEAST:G3O-33712-MONOMER"/>
<dbReference type="Reactome" id="R-SCE-113418">
    <property type="pathway name" value="Formation of the Early Elongation Complex"/>
</dbReference>
<dbReference type="Reactome" id="R-SCE-674695">
    <property type="pathway name" value="RNA Polymerase II Pre-transcription Events"/>
</dbReference>
<dbReference type="Reactome" id="R-SCE-6781823">
    <property type="pathway name" value="Formation of TC-NER Pre-Incision Complex"/>
</dbReference>
<dbReference type="Reactome" id="R-SCE-6782135">
    <property type="pathway name" value="Dual incision in TC-NER"/>
</dbReference>
<dbReference type="Reactome" id="R-SCE-6782210">
    <property type="pathway name" value="Gap-filling DNA repair synthesis and ligation in TC-NER"/>
</dbReference>
<dbReference type="Reactome" id="R-SCE-6796648">
    <property type="pathway name" value="TP53 Regulates Transcription of DNA Repair Genes"/>
</dbReference>
<dbReference type="Reactome" id="R-SCE-6807505">
    <property type="pathway name" value="RNA polymerase II transcribes snRNA genes"/>
</dbReference>
<dbReference type="Reactome" id="R-SCE-72086">
    <property type="pathway name" value="mRNA Capping"/>
</dbReference>
<dbReference type="Reactome" id="R-SCE-72203">
    <property type="pathway name" value="Processing of Capped Intron-Containing Pre-mRNA"/>
</dbReference>
<dbReference type="Reactome" id="R-SCE-73762">
    <property type="pathway name" value="RNA Polymerase I Transcription Initiation"/>
</dbReference>
<dbReference type="Reactome" id="R-SCE-73772">
    <property type="pathway name" value="RNA Polymerase I Promoter Escape"/>
</dbReference>
<dbReference type="Reactome" id="R-SCE-73776">
    <property type="pathway name" value="RNA Polymerase II Promoter Escape"/>
</dbReference>
<dbReference type="Reactome" id="R-SCE-73779">
    <property type="pathway name" value="RNA Polymerase II Transcription Pre-Initiation And Promoter Opening"/>
</dbReference>
<dbReference type="Reactome" id="R-SCE-75953">
    <property type="pathway name" value="RNA Polymerase II Transcription Initiation"/>
</dbReference>
<dbReference type="Reactome" id="R-SCE-76042">
    <property type="pathway name" value="RNA Polymerase II Transcription Initiation And Promoter Clearance"/>
</dbReference>
<dbReference type="Reactome" id="R-SCE-76066">
    <property type="pathway name" value="RNA Polymerase III Transcription Initiation From Type 2 Promoter"/>
</dbReference>
<dbReference type="Reactome" id="R-SCE-77075">
    <property type="pathway name" value="RNA Pol II CTD phosphorylation and interaction with CE"/>
</dbReference>
<dbReference type="Reactome" id="R-SCE-9018519">
    <property type="pathway name" value="Estrogen-dependent gene expression"/>
</dbReference>
<dbReference type="BioGRID-ORCS" id="854385">
    <property type="hits" value="3 hits in 10 CRISPR screens"/>
</dbReference>
<dbReference type="CD-CODE" id="BDAE0F88">
    <property type="entry name" value="Nucleolus"/>
</dbReference>
<dbReference type="EvolutionaryTrace" id="P22139"/>
<dbReference type="PRO" id="PR:P22139"/>
<dbReference type="Proteomes" id="UP000002311">
    <property type="component" value="Chromosome XV"/>
</dbReference>
<dbReference type="RNAct" id="P22139">
    <property type="molecule type" value="protein"/>
</dbReference>
<dbReference type="GO" id="GO:0005654">
    <property type="term" value="C:nucleoplasm"/>
    <property type="evidence" value="ECO:0000304"/>
    <property type="project" value="Reactome"/>
</dbReference>
<dbReference type="GO" id="GO:0005634">
    <property type="term" value="C:nucleus"/>
    <property type="evidence" value="ECO:0000314"/>
    <property type="project" value="ComplexPortal"/>
</dbReference>
<dbReference type="GO" id="GO:0005736">
    <property type="term" value="C:RNA polymerase I complex"/>
    <property type="evidence" value="ECO:0000314"/>
    <property type="project" value="UniProtKB"/>
</dbReference>
<dbReference type="GO" id="GO:0005665">
    <property type="term" value="C:RNA polymerase II, core complex"/>
    <property type="evidence" value="ECO:0000314"/>
    <property type="project" value="SGD"/>
</dbReference>
<dbReference type="GO" id="GO:0005666">
    <property type="term" value="C:RNA polymerase III complex"/>
    <property type="evidence" value="ECO:0000314"/>
    <property type="project" value="SGD"/>
</dbReference>
<dbReference type="GO" id="GO:0003677">
    <property type="term" value="F:DNA binding"/>
    <property type="evidence" value="ECO:0007669"/>
    <property type="project" value="InterPro"/>
</dbReference>
<dbReference type="GO" id="GO:0003899">
    <property type="term" value="F:DNA-directed RNA polymerase activity"/>
    <property type="evidence" value="ECO:0000314"/>
    <property type="project" value="UniProtKB"/>
</dbReference>
<dbReference type="GO" id="GO:0008270">
    <property type="term" value="F:zinc ion binding"/>
    <property type="evidence" value="ECO:0000314"/>
    <property type="project" value="SGD"/>
</dbReference>
<dbReference type="GO" id="GO:0042790">
    <property type="term" value="P:nucleolar large rRNA transcription by RNA polymerase I"/>
    <property type="evidence" value="ECO:0000314"/>
    <property type="project" value="ComplexPortal"/>
</dbReference>
<dbReference type="GO" id="GO:0042254">
    <property type="term" value="P:ribosome biogenesis"/>
    <property type="evidence" value="ECO:0007669"/>
    <property type="project" value="UniProtKB-KW"/>
</dbReference>
<dbReference type="GO" id="GO:0001172">
    <property type="term" value="P:RNA-templated transcription"/>
    <property type="evidence" value="ECO:0007669"/>
    <property type="project" value="GOC"/>
</dbReference>
<dbReference type="GO" id="GO:0006363">
    <property type="term" value="P:termination of RNA polymerase I transcription"/>
    <property type="evidence" value="ECO:0000314"/>
    <property type="project" value="ComplexPortal"/>
</dbReference>
<dbReference type="GO" id="GO:0006386">
    <property type="term" value="P:termination of RNA polymerase III transcription"/>
    <property type="evidence" value="ECO:0000314"/>
    <property type="project" value="ComplexPortal"/>
</dbReference>
<dbReference type="GO" id="GO:0006360">
    <property type="term" value="P:transcription by RNA polymerase I"/>
    <property type="evidence" value="ECO:0000314"/>
    <property type="project" value="UniProtKB"/>
</dbReference>
<dbReference type="GO" id="GO:0006366">
    <property type="term" value="P:transcription by RNA polymerase II"/>
    <property type="evidence" value="ECO:0000315"/>
    <property type="project" value="SGD"/>
</dbReference>
<dbReference type="GO" id="GO:0006383">
    <property type="term" value="P:transcription by RNA polymerase III"/>
    <property type="evidence" value="ECO:0000314"/>
    <property type="project" value="ComplexPortal"/>
</dbReference>
<dbReference type="GO" id="GO:0006362">
    <property type="term" value="P:transcription elongation by RNA polymerase I"/>
    <property type="evidence" value="ECO:0000314"/>
    <property type="project" value="ComplexPortal"/>
</dbReference>
<dbReference type="GO" id="GO:0006368">
    <property type="term" value="P:transcription elongation by RNA polymerase II"/>
    <property type="evidence" value="ECO:0000314"/>
    <property type="project" value="ComplexPortal"/>
</dbReference>
<dbReference type="GO" id="GO:0006361">
    <property type="term" value="P:transcription initiation at RNA polymerase I promoter"/>
    <property type="evidence" value="ECO:0000314"/>
    <property type="project" value="ComplexPortal"/>
</dbReference>
<dbReference type="GO" id="GO:0006367">
    <property type="term" value="P:transcription initiation at RNA polymerase II promoter"/>
    <property type="evidence" value="ECO:0000314"/>
    <property type="project" value="ComplexPortal"/>
</dbReference>
<dbReference type="GO" id="GO:0006384">
    <property type="term" value="P:transcription initiation at RNA polymerase III promoter"/>
    <property type="evidence" value="ECO:0000314"/>
    <property type="project" value="ComplexPortal"/>
</dbReference>
<dbReference type="GO" id="GO:0042797">
    <property type="term" value="P:tRNA transcription by RNA polymerase III"/>
    <property type="evidence" value="ECO:0000314"/>
    <property type="project" value="SGD"/>
</dbReference>
<dbReference type="FunFam" id="1.10.10.60:FF:000024">
    <property type="entry name" value="DNA-directed RNA polymerases I, II, and III subunit"/>
    <property type="match status" value="1"/>
</dbReference>
<dbReference type="Gene3D" id="1.10.10.60">
    <property type="entry name" value="Homeodomain-like"/>
    <property type="match status" value="1"/>
</dbReference>
<dbReference type="HAMAP" id="MF_00250">
    <property type="entry name" value="RNApol_arch_Rpo10"/>
    <property type="match status" value="1"/>
</dbReference>
<dbReference type="InterPro" id="IPR023580">
    <property type="entry name" value="RNA_pol_su_RPB10"/>
</dbReference>
<dbReference type="InterPro" id="IPR020789">
    <property type="entry name" value="RNA_pol_suN_Zn-BS"/>
</dbReference>
<dbReference type="InterPro" id="IPR000268">
    <property type="entry name" value="RPABC5/Rpb10"/>
</dbReference>
<dbReference type="NCBIfam" id="NF003089">
    <property type="entry name" value="PRK04016.1"/>
    <property type="match status" value="1"/>
</dbReference>
<dbReference type="PANTHER" id="PTHR23431:SF3">
    <property type="entry name" value="DNA-DIRECTED RNA POLYMERASES I, II, AND III SUBUNIT RPABC5"/>
    <property type="match status" value="1"/>
</dbReference>
<dbReference type="PANTHER" id="PTHR23431">
    <property type="entry name" value="DNA-DIRECTED RNA POLYMERASES I, II, AND III SUBUNIT RPABC5 FAMILY MEMBER"/>
    <property type="match status" value="1"/>
</dbReference>
<dbReference type="Pfam" id="PF01194">
    <property type="entry name" value="RNA_pol_N"/>
    <property type="match status" value="1"/>
</dbReference>
<dbReference type="PIRSF" id="PIRSF005653">
    <property type="entry name" value="RNA_pol_N/8_sub"/>
    <property type="match status" value="1"/>
</dbReference>
<dbReference type="SUPFAM" id="SSF46924">
    <property type="entry name" value="RNA polymerase subunit RPB10"/>
    <property type="match status" value="1"/>
</dbReference>
<dbReference type="PROSITE" id="PS01112">
    <property type="entry name" value="RNA_POL_N_8KD"/>
    <property type="match status" value="1"/>
</dbReference>
<sequence length="70" mass="8278">MIVPVRCFSCGKVVGDKWESYLNLLQEDELDEGTALSRLGLKRYCCRRMILTHVDLIEKFLRYNPLEKRD</sequence>
<accession>P22139</accession>
<accession>D6W2R6</accession>
<organism>
    <name type="scientific">Saccharomyces cerevisiae (strain ATCC 204508 / S288c)</name>
    <name type="common">Baker's yeast</name>
    <dbReference type="NCBI Taxonomy" id="559292"/>
    <lineage>
        <taxon>Eukaryota</taxon>
        <taxon>Fungi</taxon>
        <taxon>Dikarya</taxon>
        <taxon>Ascomycota</taxon>
        <taxon>Saccharomycotina</taxon>
        <taxon>Saccharomycetes</taxon>
        <taxon>Saccharomycetales</taxon>
        <taxon>Saccharomycetaceae</taxon>
        <taxon>Saccharomyces</taxon>
    </lineage>
</organism>
<reference key="1">
    <citation type="journal article" date="1990" name="J. Biol. Chem.">
        <title>RNA polymerase II subunit RPB10 is essential for yeast cell viability.</title>
        <authorList>
            <person name="Woychik N.A."/>
            <person name="Young R.A."/>
        </authorList>
    </citation>
    <scope>NUCLEOTIDE SEQUENCE [GENOMIC DNA]</scope>
    <scope>PROTEIN SEQUENCE OF 1-27</scope>
</reference>
<reference key="2">
    <citation type="journal article" date="1993" name="J. Biol. Chem.">
        <authorList>
            <person name="Woychik N.A."/>
            <person name="Young R.A."/>
        </authorList>
    </citation>
    <scope>ERRATUM OF PUBMED:2211663</scope>
    <scope>SEQUENCE REVISION</scope>
</reference>
<reference key="3">
    <citation type="journal article" date="1993" name="Proc. Natl. Acad. Sci. U.S.A.">
        <title>Interactions between three common subunits of yeast RNA polymerases I and III.</title>
        <authorList>
            <person name="Lalo D."/>
            <person name="Carles C."/>
            <person name="Sentenac A."/>
            <person name="Thuriaux P."/>
        </authorList>
    </citation>
    <scope>NUCLEOTIDE SEQUENCE [GENOMIC DNA]</scope>
    <source>
        <strain>ATCC 28383 / FL100 / VTT C-80102</strain>
    </source>
</reference>
<reference key="4">
    <citation type="journal article" date="1997" name="Nature">
        <title>The nucleotide sequence of Saccharomyces cerevisiae chromosome XV.</title>
        <authorList>
            <person name="Dujon B."/>
            <person name="Albermann K."/>
            <person name="Aldea M."/>
            <person name="Alexandraki D."/>
            <person name="Ansorge W."/>
            <person name="Arino J."/>
            <person name="Benes V."/>
            <person name="Bohn C."/>
            <person name="Bolotin-Fukuhara M."/>
            <person name="Bordonne R."/>
            <person name="Boyer J."/>
            <person name="Camasses A."/>
            <person name="Casamayor A."/>
            <person name="Casas C."/>
            <person name="Cheret G."/>
            <person name="Cziepluch C."/>
            <person name="Daignan-Fornier B."/>
            <person name="Dang V.-D."/>
            <person name="de Haan M."/>
            <person name="Delius H."/>
            <person name="Durand P."/>
            <person name="Fairhead C."/>
            <person name="Feldmann H."/>
            <person name="Gaillon L."/>
            <person name="Galisson F."/>
            <person name="Gamo F.-J."/>
            <person name="Gancedo C."/>
            <person name="Goffeau A."/>
            <person name="Goulding S.E."/>
            <person name="Grivell L.A."/>
            <person name="Habbig B."/>
            <person name="Hand N.J."/>
            <person name="Hani J."/>
            <person name="Hattenhorst U."/>
            <person name="Hebling U."/>
            <person name="Hernando Y."/>
            <person name="Herrero E."/>
            <person name="Heumann K."/>
            <person name="Hiesel R."/>
            <person name="Hilger F."/>
            <person name="Hofmann B."/>
            <person name="Hollenberg C.P."/>
            <person name="Hughes B."/>
            <person name="Jauniaux J.-C."/>
            <person name="Kalogeropoulos A."/>
            <person name="Katsoulou C."/>
            <person name="Kordes E."/>
            <person name="Lafuente M.J."/>
            <person name="Landt O."/>
            <person name="Louis E.J."/>
            <person name="Maarse A.C."/>
            <person name="Madania A."/>
            <person name="Mannhaupt G."/>
            <person name="Marck C."/>
            <person name="Martin R.P."/>
            <person name="Mewes H.-W."/>
            <person name="Michaux G."/>
            <person name="Paces V."/>
            <person name="Parle-McDermott A.G."/>
            <person name="Pearson B.M."/>
            <person name="Perrin A."/>
            <person name="Pettersson B."/>
            <person name="Poch O."/>
            <person name="Pohl T.M."/>
            <person name="Poirey R."/>
            <person name="Portetelle D."/>
            <person name="Pujol A."/>
            <person name="Purnelle B."/>
            <person name="Ramezani Rad M."/>
            <person name="Rechmann S."/>
            <person name="Schwager C."/>
            <person name="Schweizer M."/>
            <person name="Sor F."/>
            <person name="Sterky F."/>
            <person name="Tarassov I.A."/>
            <person name="Teodoru C."/>
            <person name="Tettelin H."/>
            <person name="Thierry A."/>
            <person name="Tobiasch E."/>
            <person name="Tzermia M."/>
            <person name="Uhlen M."/>
            <person name="Unseld M."/>
            <person name="Valens M."/>
            <person name="Vandenbol M."/>
            <person name="Vetter I."/>
            <person name="Vlcek C."/>
            <person name="Voet M."/>
            <person name="Volckaert G."/>
            <person name="Voss H."/>
            <person name="Wambutt R."/>
            <person name="Wedler H."/>
            <person name="Wiemann S."/>
            <person name="Winsor B."/>
            <person name="Wolfe K.H."/>
            <person name="Zollner A."/>
            <person name="Zumstein E."/>
            <person name="Kleine K."/>
        </authorList>
    </citation>
    <scope>NUCLEOTIDE SEQUENCE [LARGE SCALE GENOMIC DNA]</scope>
    <source>
        <strain>ATCC 204508 / S288c</strain>
    </source>
</reference>
<reference key="5">
    <citation type="journal article" date="2014" name="G3 (Bethesda)">
        <title>The reference genome sequence of Saccharomyces cerevisiae: Then and now.</title>
        <authorList>
            <person name="Engel S.R."/>
            <person name="Dietrich F.S."/>
            <person name="Fisk D.G."/>
            <person name="Binkley G."/>
            <person name="Balakrishnan R."/>
            <person name="Costanzo M.C."/>
            <person name="Dwight S.S."/>
            <person name="Hitz B.C."/>
            <person name="Karra K."/>
            <person name="Nash R.S."/>
            <person name="Weng S."/>
            <person name="Wong E.D."/>
            <person name="Lloyd P."/>
            <person name="Skrzypek M.S."/>
            <person name="Miyasato S.R."/>
            <person name="Simison M."/>
            <person name="Cherry J.M."/>
        </authorList>
    </citation>
    <scope>GENOME REANNOTATION</scope>
    <source>
        <strain>ATCC 204508 / S288c</strain>
    </source>
</reference>
<reference key="6">
    <citation type="journal article" date="2007" name="Genome Res.">
        <title>Approaching a complete repository of sequence-verified protein-encoding clones for Saccharomyces cerevisiae.</title>
        <authorList>
            <person name="Hu Y."/>
            <person name="Rolfs A."/>
            <person name="Bhullar B."/>
            <person name="Murthy T.V.S."/>
            <person name="Zhu C."/>
            <person name="Berger M.F."/>
            <person name="Camargo A.A."/>
            <person name="Kelley F."/>
            <person name="McCarron S."/>
            <person name="Jepson D."/>
            <person name="Richardson A."/>
            <person name="Raphael J."/>
            <person name="Moreira D."/>
            <person name="Taycher E."/>
            <person name="Zuo D."/>
            <person name="Mohr S."/>
            <person name="Kane M.F."/>
            <person name="Williamson J."/>
            <person name="Simpson A.J.G."/>
            <person name="Bulyk M.L."/>
            <person name="Harlow E."/>
            <person name="Marsischky G."/>
            <person name="Kolodner R.D."/>
            <person name="LaBaer J."/>
        </authorList>
    </citation>
    <scope>NUCLEOTIDE SEQUENCE [GENOMIC DNA]</scope>
    <source>
        <strain>ATCC 204508 / S288c</strain>
    </source>
</reference>
<reference key="7">
    <citation type="journal article" date="1998" name="Cold Spring Harb. Symp. Quant. Biol.">
        <title>The yeast RNA polymerase III transcription machinery: a paradigm for eukaryotic gene activation.</title>
        <authorList>
            <person name="Chedin S."/>
            <person name="Ferri M.L."/>
            <person name="Peyroche G."/>
            <person name="Andrau J.-C."/>
            <person name="Jourdain S."/>
            <person name="Lefebvre O."/>
            <person name="Werner M."/>
            <person name="Carles C."/>
            <person name="Sentenac A."/>
        </authorList>
    </citation>
    <scope>REVIEW ON THE RNA POL III COMPLEX</scope>
</reference>
<reference key="8">
    <citation type="journal article" date="2003" name="Nature">
        <title>Global analysis of protein localization in budding yeast.</title>
        <authorList>
            <person name="Huh W.-K."/>
            <person name="Falvo J.V."/>
            <person name="Gerke L.C."/>
            <person name="Carroll A.S."/>
            <person name="Howson R.W."/>
            <person name="Weissman J.S."/>
            <person name="O'Shea E.K."/>
        </authorList>
    </citation>
    <scope>SUBCELLULAR LOCATION [LARGE SCALE ANALYSIS]</scope>
</reference>
<reference key="9">
    <citation type="journal article" date="2003" name="Nature">
        <title>Global analysis of protein expression in yeast.</title>
        <authorList>
            <person name="Ghaemmaghami S."/>
            <person name="Huh W.-K."/>
            <person name="Bower K."/>
            <person name="Howson R.W."/>
            <person name="Belle A."/>
            <person name="Dephoure N."/>
            <person name="O'Shea E.K."/>
            <person name="Weissman J.S."/>
        </authorList>
    </citation>
    <scope>LEVEL OF PROTEIN EXPRESSION [LARGE SCALE ANALYSIS]</scope>
</reference>
<reference key="10">
    <citation type="journal article" date="2012" name="Proteomics">
        <title>Sites of ubiquitin attachment in Saccharomyces cerevisiae.</title>
        <authorList>
            <person name="Starita L.M."/>
            <person name="Lo R.S."/>
            <person name="Eng J.K."/>
            <person name="von Haller P.D."/>
            <person name="Fields S."/>
        </authorList>
    </citation>
    <scope>UBIQUITINATION [LARGE SCALE ANALYSIS] AT LYS-59</scope>
    <scope>IDENTIFICATION BY MASS SPECTROMETRY [LARGE SCALE ANALYSIS]</scope>
</reference>
<reference key="11">
    <citation type="journal article" date="2003" name="Mol. Cell">
        <title>RNA polymerase II/TFIIF structure and conserved organization of the initiation complex.</title>
        <authorList>
            <person name="Chung W.H."/>
            <person name="Craighead J.L."/>
            <person name="Chang W.H."/>
            <person name="Ezeokonkwo C."/>
            <person name="Bareket-Samish A."/>
            <person name="Kornberg R.D."/>
            <person name="Asturias F.J."/>
        </authorList>
    </citation>
    <scope>ELECTRON MICROSCOPY OF THE RNA POL II/TFIIF COMPLEX</scope>
</reference>
<reference key="12">
    <citation type="journal article" date="2001" name="Science">
        <title>Structural basis of transcription: RNA polymerase II at 2.8 A resolution.</title>
        <authorList>
            <person name="Cramer P."/>
            <person name="Bushnell D.A."/>
            <person name="Kornberg R.D."/>
        </authorList>
    </citation>
    <scope>X-RAY CRYSTALLOGRAPHY (2.8 ANGSTROMS) OF THE RNA POL II CORE COMPLEX</scope>
</reference>
<reference key="13">
    <citation type="journal article" date="2001" name="Science">
        <title>Structural basis of transcription: an RNA polymerase II elongation complex at 3.3 A resolution.</title>
        <authorList>
            <person name="Gnatt A.L."/>
            <person name="Cramer P."/>
            <person name="Fu J."/>
            <person name="Bushnell D.A."/>
            <person name="Kornberg R.D."/>
        </authorList>
    </citation>
    <scope>X-RAY CRYSTALLOGRAPHY (3.3 ANGSTROMS) OF THE RNA POL II CORE COMPLEX</scope>
</reference>
<reference key="14">
    <citation type="journal article" date="2002" name="Proc. Natl. Acad. Sci. U.S.A.">
        <title>Structural basis of transcription: alpha-amanitin-RNA polymerase II cocrystal at 2.8 A resolution.</title>
        <authorList>
            <person name="Bushnell D.A."/>
            <person name="Cramer P."/>
            <person name="Kornberg R.D."/>
        </authorList>
    </citation>
    <scope>X-RAY CRYSTALLOGRAPHY (2.8 ANGSTROMS) OF THE RNA POL II CORE COMPLEX IN COMPLEX WITH ALPHA-AMANITIN</scope>
</reference>
<reference key="15">
    <citation type="journal article" date="2003" name="Cell">
        <title>Architecture of the RNA polymerase II-TFIIS complex and implications for mRNA cleavage.</title>
        <authorList>
            <person name="Kettenberger H."/>
            <person name="Armache K.J."/>
            <person name="Cramer P."/>
        </authorList>
    </citation>
    <scope>X-RAY CRYSTALLOGRAPHY (3.8 ANGSTROMS) OF THE RNA POL II COMPLEX IN COMPLEX WITH DST1</scope>
</reference>
<reference key="16">
    <citation type="journal article" date="2003" name="Proc. Natl. Acad. Sci. U.S.A.">
        <title>Architecture of initiation-competent 12-subunit RNA polymerase II.</title>
        <authorList>
            <person name="Armache K.J."/>
            <person name="Kettenberger H."/>
            <person name="Cramer P."/>
        </authorList>
    </citation>
    <scope>X-RAY CRYSTALLOGRAPHY (4.2 ANGSTROMS) OF THE RNA POL II COMPLEX</scope>
</reference>
<reference key="17">
    <citation type="journal article" date="2003" name="Proc. Natl. Acad. Sci. U.S.A.">
        <title>Complete, 12-subunit RNA polymerase II at 4.1-A resolution: implications for the initiation of transcription.</title>
        <authorList>
            <person name="Bushnell D.A."/>
            <person name="Kornberg R.D."/>
        </authorList>
    </citation>
    <scope>X-RAY CRYSTALLOGRAPHY (4.1 ANGSTROMS) OF THE RNA POL II CORE COMPLEX</scope>
</reference>
<reference key="18">
    <citation type="journal article" date="2004" name="Cell">
        <title>Structural basis of transcription: nucleotide selection by rotation in the RNA polymerase II active center.</title>
        <authorList>
            <person name="Westover K.D."/>
            <person name="Bushnell D.A."/>
            <person name="Kornberg R.D."/>
        </authorList>
    </citation>
    <scope>X-RAY CRYSTALLOGRAPHY (2.3 ANGSTROMS) OF THE RNA POL II CORE COMPLEX IN COMPLEX WITH ZINC</scope>
</reference>
<reference key="19">
    <citation type="journal article" date="2004" name="Mol. Cell">
        <title>Complete RNA polymerase II elongation complex structure and its interactions with NTP and TFIIS.</title>
        <authorList>
            <person name="Kettenberger H."/>
            <person name="Armache K.J."/>
            <person name="Cramer P."/>
        </authorList>
    </citation>
    <scope>X-RAY CRYSTALLOGRAPHY (4.5 ANGSTROMS)</scope>
</reference>
<reference key="20">
    <citation type="journal article" date="2004" name="Science">
        <title>Structural basis of transcription: an RNA polymerase II-TFIIB cocrystal at 4.5 Angstroms.</title>
        <authorList>
            <person name="Bushnell D.A."/>
            <person name="Westover K.D."/>
            <person name="Davis R.E."/>
            <person name="Kornberg R.D."/>
        </authorList>
    </citation>
    <scope>X-RAY CRYSTALLOGRAPHY (4.5 ANGSTROMS) OF THE RNA POL II CORE COMPLEX</scope>
</reference>
<reference key="21">
    <citation type="journal article" date="2005" name="J. Biol. Chem.">
        <title>Structures of complete RNA polymerase II and its subcomplex, Rpb4/7.</title>
        <authorList>
            <person name="Armache K.J."/>
            <person name="Mitterweger S."/>
            <person name="Meinhart A."/>
            <person name="Cramer P."/>
        </authorList>
    </citation>
    <scope>X-RAY CRYSTALLOGRAPHY (3.8 ANGSTROMS) OF THE RNA POL II COMPLEX</scope>
</reference>
<reference key="22">
    <citation type="journal article" date="2006" name="Mol. Cell">
        <title>Structural biology of RNA polymerase III: subcomplex C17/25 X-ray structure and 11 subunit enzyme model.</title>
        <authorList>
            <person name="Jasiak A.J."/>
            <person name="Armache K.J."/>
            <person name="Martens B."/>
            <person name="Jansen R.P."/>
            <person name="Cramer P."/>
        </authorList>
    </citation>
    <scope>3D-STRUCTURE MODELING OF THE POL III CORE COMPLEX</scope>
</reference>
<reference key="23">
    <citation type="journal article" date="2006" name="Nat. Struct. Mol. Biol.">
        <title>Structure of an RNA polymerase II-RNA inhibitor complex elucidates transcription regulation by noncoding RNAs.</title>
        <authorList>
            <person name="Kettenberger H."/>
            <person name="Eisenfuhr A."/>
            <person name="Brueckner F."/>
            <person name="Theis M."/>
            <person name="Famulok M."/>
            <person name="Cramer P."/>
        </authorList>
    </citation>
    <scope>X-RAY CRYSTALLOGRAPHY (3.8 ANGSTROMS) OF THE RNA POL II COMPLEX IN COMPLEX WITH INHIBITING NON-CODING RNA</scope>
</reference>
<reference key="24">
    <citation type="journal article" date="2006" name="Structure">
        <title>Phasing RNA polymerase II using intrinsically bound Zn atoms: an updated structural model.</title>
        <authorList>
            <person name="Meyer P.A."/>
            <person name="Ye P."/>
            <person name="Zhang M."/>
            <person name="Suh M.H."/>
            <person name="Fu J."/>
        </authorList>
    </citation>
    <scope>X-RAY CRYSTALLOGRAPHY (4.15 ANGSTROMS) OF THE RNA POL II COMPLEX</scope>
</reference>
<reference key="25">
    <citation type="journal article" date="2007" name="Cell">
        <title>Functional architecture of RNA polymerase I.</title>
        <authorList>
            <person name="Kuhn C.D."/>
            <person name="Geiger S.R."/>
            <person name="Baumli S."/>
            <person name="Gartmann M."/>
            <person name="Gerber J."/>
            <person name="Jennebach S."/>
            <person name="Mielke T."/>
            <person name="Tschochner H."/>
            <person name="Beckmann R."/>
            <person name="Cramer P."/>
        </authorList>
    </citation>
    <scope>STRUCTURE BY ELECTRON MICROSCOPY (12.00 ANGSTROMS) OF THE POL I COMPLEX</scope>
    <scope>FUNCTION</scope>
    <scope>SUBUNIT</scope>
</reference>
<reference key="26">
    <citation type="journal article" date="2013" name="Nature">
        <title>Crystal structure of the 14-subunit RNA polymerase I.</title>
        <authorList>
            <person name="Fernandez-Tornero C."/>
            <person name="Moreno-Morcillo M."/>
            <person name="Rashid U.J."/>
            <person name="Taylor N.M."/>
            <person name="Ruiz F.M."/>
            <person name="Gruene T."/>
            <person name="Legrand P."/>
            <person name="Steuerwald U."/>
            <person name="Muller C.W."/>
        </authorList>
    </citation>
    <scope>X-RAY CRYSTALLOGRAPHY (3.0 ANGSTROMS) OF THE POL I COMPLEX</scope>
    <scope>FUNCTION</scope>
    <scope>SUBUNIT</scope>
</reference>
<reference key="27">
    <citation type="journal article" date="2013" name="Nature">
        <title>RNA polymerase I structure and transcription regulation.</title>
        <authorList>
            <person name="Engel C."/>
            <person name="Sainsbury S."/>
            <person name="Cheung A.C."/>
            <person name="Kostrewa D."/>
            <person name="Cramer P."/>
        </authorList>
    </citation>
    <scope>X-RAY CRYSTALLOGRAPHY (2.8 ANGSTROMS) OF THE POL I COMPLEX</scope>
    <scope>FUNCTION</scope>
    <scope>ZINC-BINDING</scope>
    <scope>SUBUNIT</scope>
</reference>
<keyword id="KW-0002">3D-structure</keyword>
<keyword id="KW-0903">Direct protein sequencing</keyword>
<keyword id="KW-0240">DNA-directed RNA polymerase</keyword>
<keyword id="KW-1017">Isopeptide bond</keyword>
<keyword id="KW-0479">Metal-binding</keyword>
<keyword id="KW-0539">Nucleus</keyword>
<keyword id="KW-1185">Reference proteome</keyword>
<keyword id="KW-0690">Ribosome biogenesis</keyword>
<keyword id="KW-0804">Transcription</keyword>
<keyword id="KW-0832">Ubl conjugation</keyword>
<keyword id="KW-0862">Zinc</keyword>
<protein>
    <recommendedName>
        <fullName>DNA-directed RNA polymerases I, II, and III subunit RPABC5</fullName>
        <shortName>RNA polymerases I, II, and III subunit ABC5</shortName>
    </recommendedName>
    <alternativeName>
        <fullName>ABC10-beta</fullName>
    </alternativeName>
    <alternativeName>
        <fullName>ABC8</fullName>
    </alternativeName>
    <alternativeName>
        <fullName>DNA-directed RNA polymerases I, II, and III 8.3 kDa polypeptide</fullName>
    </alternativeName>
</protein>
<gene>
    <name type="primary">RPB10</name>
    <name type="ordered locus">YOR210W</name>
</gene>
<proteinExistence type="evidence at protein level"/>